<feature type="chain" id="PRO_0000065809" description="von Hippel-Lindau disease tumor suppressor">
    <location>
        <begin position="1"/>
        <end position="213"/>
    </location>
</feature>
<feature type="repeat" description="1">
    <location>
        <begin position="14"/>
        <end position="18"/>
    </location>
</feature>
<feature type="repeat" description="2">
    <location>
        <begin position="19"/>
        <end position="23"/>
    </location>
</feature>
<feature type="repeat" description="3">
    <location>
        <begin position="24"/>
        <end position="28"/>
    </location>
</feature>
<feature type="repeat" description="4">
    <location>
        <begin position="29"/>
        <end position="33"/>
    </location>
</feature>
<feature type="repeat" description="5">
    <location>
        <begin position="34"/>
        <end position="38"/>
    </location>
</feature>
<feature type="repeat" description="6">
    <location>
        <begin position="39"/>
        <end position="43"/>
    </location>
</feature>
<feature type="repeat" description="7">
    <location>
        <begin position="44"/>
        <end position="48"/>
    </location>
</feature>
<feature type="repeat" description="8">
    <location>
        <begin position="49"/>
        <end position="53"/>
    </location>
</feature>
<feature type="region of interest" description="Disordered" evidence="2">
    <location>
        <begin position="1"/>
        <end position="65"/>
    </location>
</feature>
<feature type="region of interest" description="8 X 5 AA tandem repeats of G-[PAVG]-E-E-[DAYSLE]">
    <location>
        <begin position="14"/>
        <end position="53"/>
    </location>
</feature>
<feature type="region of interest" description="Involved in binding to CCT complex">
    <location>
        <begin position="100"/>
        <end position="155"/>
    </location>
</feature>
<feature type="region of interest" description="Interaction with Elongin BC complex">
    <location>
        <begin position="157"/>
        <end position="166"/>
    </location>
</feature>
<feature type="compositionally biased region" description="Acidic residues" evidence="2">
    <location>
        <begin position="8"/>
        <end position="54"/>
    </location>
</feature>
<feature type="splice variant" id="VSP_007740" description="In isoform 3." evidence="56">
    <location>
        <begin position="1"/>
        <end position="53"/>
    </location>
</feature>
<feature type="splice variant" id="VSP_004488" description="In isoform 2." evidence="54">
    <location>
        <begin position="114"/>
        <end position="154"/>
    </location>
</feature>
<feature type="sequence variant" id="VAR_034562" description="In PCC; benign; dbSNP:rs35460768." evidence="21 25 47">
    <original>P</original>
    <variation>L</variation>
    <location>
        <position position="25"/>
    </location>
</feature>
<feature type="sequence variant" id="VAR_005670" description="In VHLD; type II." evidence="45">
    <original>S</original>
    <variation>P</variation>
    <location>
        <position position="38"/>
    </location>
</feature>
<feature type="sequence variant" id="VAR_005671" description="In VHLD; benign; type I; dbSNP:rs373068386." evidence="51">
    <original>E</original>
    <variation>K</variation>
    <location>
        <position position="52"/>
    </location>
</feature>
<feature type="sequence variant" id="VAR_034987" description="In PCC; dbSNP:rs104893827." evidence="47">
    <original>L</original>
    <variation>P</variation>
    <location>
        <position position="63"/>
    </location>
</feature>
<feature type="sequence variant" id="VAR_034988" description="In PCC; dbSNP:rs104893826." evidence="47">
    <original>R</original>
    <variation>P</variation>
    <location>
        <position position="64"/>
    </location>
</feature>
<feature type="sequence variant" id="VAR_034989" description="In PCC; dbSNP:rs869025616." evidence="13">
    <original>S</original>
    <variation>A</variation>
    <location>
        <position position="65"/>
    </location>
</feature>
<feature type="sequence variant" id="VAR_005672" description="In VHLD; type I; dbSNP:rs5030826." evidence="43 51">
    <original>S</original>
    <variation>L</variation>
    <location>
        <position position="65"/>
    </location>
</feature>
<feature type="sequence variant" id="VAR_005673" description="In VHLD; type I; dbSNP:rs5030826." evidence="43 50">
    <original>S</original>
    <variation>W</variation>
    <location>
        <position position="65"/>
    </location>
</feature>
<feature type="sequence variant" id="VAR_005674" description="In VHLD; type I.">
    <location>
        <begin position="66"/>
        <end position="73"/>
    </location>
</feature>
<feature type="sequence variant" id="VAR_005675" description="In PCC and VHLD; type II; dbSNP:rs869025617." evidence="6 13">
    <original>S</original>
    <variation>W</variation>
    <location>
        <position position="68"/>
    </location>
</feature>
<feature type="sequence variant" id="VAR_005676" description="In VHLD; type I; dbSNP:rs5030802." evidence="51">
    <original>E</original>
    <variation>K</variation>
    <location>
        <position position="70"/>
    </location>
</feature>
<feature type="sequence variant" id="VAR_005677" description="In VHLD; type I-II; dbSNP:rs5030803." evidence="43">
    <original>V</original>
    <variation>G</variation>
    <location>
        <position position="74"/>
    </location>
</feature>
<feature type="sequence variant" id="VAR_034990" description="In VHLD; dbSNP:rs794729660." evidence="36">
    <location>
        <position position="75"/>
    </location>
</feature>
<feature type="sequence variant" id="VAR_005679" description="In VHLD; type I; dbSNP:rs1559425911." evidence="43">
    <original>F</original>
    <variation>I</variation>
    <location>
        <position position="76"/>
    </location>
</feature>
<feature type="sequence variant" id="VAR_005680" description="In VHLD; type I; dbSNP:rs1575921940." evidence="45">
    <original>F</original>
    <variation>L</variation>
    <location>
        <position position="76"/>
    </location>
</feature>
<feature type="sequence variant" id="VAR_005681" description="In VHLD; type I; dbSNP:rs730882033." evidence="50">
    <original>F</original>
    <variation>S</variation>
    <location>
        <position position="76"/>
    </location>
</feature>
<feature type="sequence variant" id="VAR_005678" description="In VHLD; type I." evidence="43">
    <location>
        <position position="76"/>
    </location>
</feature>
<feature type="sequence variant" id="VAR_005682" description="In VHLD; type I; dbSNP:rs869025621." evidence="43">
    <original>N</original>
    <variation>H</variation>
    <location>
        <position position="78"/>
    </location>
</feature>
<feature type="sequence variant" id="VAR_005683" description="In VHLD; type I; dbSNP:rs5030804." evidence="43">
    <original>N</original>
    <variation>S</variation>
    <location>
        <position position="78"/>
    </location>
</feature>
<feature type="sequence variant" id="VAR_005684" description="In VHLD; type I; dbSNP:rs5030804." evidence="43">
    <original>N</original>
    <variation>T</variation>
    <location>
        <position position="78"/>
    </location>
</feature>
<feature type="sequence variant" id="VAR_005685" description="In VHLD; dbSNP:rs2125125087.">
    <original>R</original>
    <variation>P</variation>
    <location>
        <position position="79"/>
    </location>
</feature>
<feature type="sequence variant" id="VAR_005686" description="In VHLD; type I; dbSNP:rs5030805." evidence="43">
    <original>S</original>
    <variation>I</variation>
    <location>
        <position position="80"/>
    </location>
</feature>
<feature type="sequence variant" id="VAR_005688" description="In PCC and VHLD; type I; dbSNP:rs5030805." evidence="13 43 51">
    <original>S</original>
    <variation>N</variation>
    <location>
        <position position="80"/>
    </location>
</feature>
<feature type="sequence variant" id="VAR_005687" description="In VHLD; type I; dbSNP:rs786202787." evidence="43 51">
    <original>S</original>
    <variation>R</variation>
    <location>
        <position position="80"/>
    </location>
</feature>
<feature type="sequence variant" id="VAR_005689" description="In VHLD; benign; type I; dbSNP:rs104893829." evidence="43 50">
    <original>P</original>
    <variation>S</variation>
    <location>
        <position position="81"/>
    </location>
</feature>
<feature type="sequence variant" id="VAR_005691" description="In VHLD." evidence="36">
    <location>
        <begin position="82"/>
        <end position="84"/>
    </location>
</feature>
<feature type="sequence variant" id="VAR_005690" description="In VHLD; type I; dbSNP:rs794726890." evidence="18">
    <original>R</original>
    <variation>P</variation>
    <location>
        <position position="82"/>
    </location>
</feature>
<feature type="sequence variant" id="VAR_005692" description="In VHLD; type II and type 2C; dbSNP:rs5030827." evidence="24 37">
    <original>V</original>
    <variation>L</variation>
    <location>
        <position position="84"/>
    </location>
</feature>
<feature type="sequence variant" id="VAR_005693" description="In VHLD; type I; dbSNP:rs398123481." evidence="43">
    <original>P</original>
    <variation>A</variation>
    <location>
        <position position="86"/>
    </location>
</feature>
<feature type="sequence variant" id="VAR_008097" description="In VHLD; dbSNP:rs730882034.">
    <original>P</original>
    <variation>H</variation>
    <location>
        <position position="86"/>
    </location>
</feature>
<feature type="sequence variant" id="VAR_005694" description="In VHLD; type I; dbSNP:rs730882034." evidence="43">
    <original>P</original>
    <variation>L</variation>
    <location>
        <position position="86"/>
    </location>
</feature>
<feature type="sequence variant" id="VAR_005695" description="In VHLD; type I; dbSNP:rs730882034." evidence="50">
    <original>P</original>
    <variation>R</variation>
    <location>
        <position position="86"/>
    </location>
</feature>
<feature type="sequence variant" id="VAR_005696" description="In VHLD; dbSNP:rs398123481." evidence="25 51">
    <original>P</original>
    <variation>S</variation>
    <location>
        <position position="86"/>
    </location>
</feature>
<feature type="sequence variant" id="VAR_005697" description="In VHLD; type I; dbSNP:rs1553619431." evidence="43 50">
    <original>W</original>
    <variation>R</variation>
    <location>
        <position position="88"/>
    </location>
</feature>
<feature type="sequence variant" id="VAR_005698" description="In VHLD; type I; dbSNP:rs119103277." evidence="43 51">
    <original>W</original>
    <variation>S</variation>
    <location>
        <position position="88"/>
    </location>
</feature>
<feature type="sequence variant" id="VAR_005699" description="In lung cancer; dbSNP:rs5030807.">
    <original>L</original>
    <variation>H</variation>
    <location>
        <position position="89"/>
    </location>
</feature>
<feature type="sequence variant" id="VAR_005700" description="In VHLD; type I; dbSNP:rs5030807." evidence="43">
    <original>L</original>
    <variation>P</variation>
    <location>
        <position position="89"/>
    </location>
</feature>
<feature type="sequence variant" id="VAR_005701" description="In cerebellar hemangioblastoma; uncertain significance; dbSNP:rs1060503563." evidence="51">
    <original>F</original>
    <variation>L</variation>
    <location>
        <position position="91"/>
    </location>
</feature>
<feature type="sequence variant" id="VAR_005702" description="In VHLD; type I.">
    <location>
        <begin position="92"/>
        <end position="97"/>
    </location>
</feature>
<feature type="sequence variant" id="VAR_005703" description="In PCC and VHLD; type II; dbSNP:rs5030808." evidence="13 52">
    <original>G</original>
    <variation>C</variation>
    <location>
        <position position="93"/>
    </location>
</feature>
<feature type="sequence variant" id="VAR_005704" description="In VHLD; dbSNP:rs1553619440.">
    <original>G</original>
    <variation>D</variation>
    <location>
        <position position="93"/>
    </location>
</feature>
<feature type="sequence variant" id="VAR_005705" description="In PCC and VHLD; type II; dbSNP:rs5030808." evidence="13">
    <original>G</original>
    <variation>S</variation>
    <location>
        <position position="93"/>
    </location>
</feature>
<feature type="sequence variant" id="VAR_005706" description="In VHLD; type I; dbSNP:rs1559426089." evidence="40">
    <original>Q</original>
    <variation>P</variation>
    <location>
        <position position="96"/>
    </location>
</feature>
<feature type="sequence variant" id="VAR_005707" description="In PCC and VHLD; type II; dbSNP:rs5030809." evidence="13">
    <original>Y</original>
    <variation>H</variation>
    <location>
        <position position="98"/>
    </location>
</feature>
<feature type="sequence variant" id="VAR_005708" description="In VHLD; type I; requires 2 nucleotide substitutions." evidence="50">
    <original>L</original>
    <variation>G</variation>
    <location>
        <position position="101"/>
    </location>
</feature>
<feature type="sequence variant" id="VAR_005709" description="In VHLD; type I." evidence="43">
    <original>L</original>
    <variation>R</variation>
    <location>
        <position position="101"/>
    </location>
</feature>
<feature type="sequence variant" id="VAR_005710" description="In cerebellar hemangioblastoma; dbSNP:rs869025630." evidence="51">
    <original>G</original>
    <variation>A</variation>
    <location>
        <position position="104"/>
    </location>
</feature>
<feature type="sequence variant" id="VAR_005711" description="In VHLD; type I; dbSNP:rs1553619461." evidence="51">
    <original>T</original>
    <variation>P</variation>
    <location>
        <position position="105"/>
    </location>
</feature>
<feature type="sequence variant" id="VAR_005712" description="In lung cancer; dbSNP:rs1446876735.">
    <original>G</original>
    <variation>D</variation>
    <location>
        <position position="106"/>
    </location>
</feature>
<feature type="sequence variant" id="VAR_034991" description="In PCC; dbSNP:rs397516440." evidence="13">
    <original>R</original>
    <variation>G</variation>
    <location>
        <position position="107"/>
    </location>
</feature>
<feature type="sequence variant" id="VAR_005713" description="In VHLD; type I; dbSNP:rs193922609." evidence="50">
    <original>R</original>
    <variation>P</variation>
    <location>
        <position position="107"/>
    </location>
</feature>
<feature type="sequence variant" id="VAR_055087" description="In dbSNP:rs17855706." evidence="22">
    <original>H</original>
    <variation>Y</variation>
    <location>
        <position position="110"/>
    </location>
</feature>
<feature type="sequence variant" id="VAR_005714" description="In VHLD; type II; dbSNP:rs1559426203." evidence="18">
    <original>S</original>
    <variation>C</variation>
    <location>
        <position position="111"/>
    </location>
</feature>
<feature type="sequence variant" id="VAR_005715" description="In VHLD; type I; dbSNP:rs869025631." evidence="43 50">
    <original>S</original>
    <variation>N</variation>
    <location>
        <position position="111"/>
    </location>
</feature>
<feature type="sequence variant" id="VAR_005716" description="In VHLD; type I; dbSNP:rs765978945." evidence="43">
    <original>S</original>
    <variation>R</variation>
    <location>
        <position position="111"/>
    </location>
</feature>
<feature type="sequence variant" id="VAR_005717" description="In VHLD; type IIA; dbSNP:rs104893824.">
    <original>Y</original>
    <variation>H</variation>
    <location>
        <position position="112"/>
    </location>
</feature>
<feature type="sequence variant" id="VAR_034992" description="In VHLD; dbSNP:rs104893824." evidence="5">
    <original>Y</original>
    <variation>N</variation>
    <location>
        <position position="112"/>
    </location>
</feature>
<feature type="sequence variant" id="VAR_005718" description="In VHLD; type II; dbSNP:rs869025636." evidence="43">
    <original>G</original>
    <variation>C</variation>
    <location>
        <position position="114"/>
    </location>
</feature>
<feature type="sequence variant" id="VAR_005719" description="In VHLD; type I-II; dbSNP:rs869025636.">
    <original>G</original>
    <variation>R</variation>
    <location>
        <position position="114"/>
    </location>
</feature>
<feature type="sequence variant" id="VAR_005720" description="In VHLD; type II; dbSNP:rs869025636." evidence="42">
    <original>G</original>
    <variation>S</variation>
    <location>
        <position position="114"/>
    </location>
</feature>
<feature type="sequence variant" id="VAR_005723" description="In VHLD; type II; dbSNP:rs864622646." evidence="51">
    <original>H</original>
    <variation>Q</variation>
    <location>
        <position position="115"/>
    </location>
</feature>
<feature type="sequence variant" id="VAR_008098" description="In VHLD; type II; dbSNP:rs5030812.">
    <original>H</original>
    <variation>R</variation>
    <location>
        <position position="115"/>
    </location>
</feature>
<feature type="sequence variant" id="VAR_005722" description="In VHLD; type I; dbSNP:rs5030811." evidence="43">
    <original>H</original>
    <variation>Y</variation>
    <location>
        <position position="115"/>
    </location>
</feature>
<feature type="sequence variant" id="VAR_005724" description="In VHLD." evidence="40">
    <original>L</original>
    <variation>V</variation>
    <location>
        <position position="116"/>
    </location>
</feature>
<feature type="sequence variant" id="VAR_005725" description="In VHLD; type I; dbSNP:rs727504215." evidence="43 50 51">
    <original>W</original>
    <variation>C</variation>
    <location>
        <position position="117"/>
    </location>
</feature>
<feature type="sequence variant" id="VAR_005726" description="In VHLD; type I; dbSNP:rs5030830." evidence="43 51">
    <original>L</original>
    <variation>P</variation>
    <location>
        <position position="118"/>
    </location>
</feature>
<feature type="sequence variant" id="VAR_005727" description="In VHLD; dbSNP:rs5030830." evidence="40">
    <original>L</original>
    <variation>R</variation>
    <location>
        <position position="118"/>
    </location>
</feature>
<feature type="sequence variant" id="VAR_005728" description="In PCC and VHLD; type II; dbSNP:rs1553619948." evidence="13">
    <original>F</original>
    <variation>L</variation>
    <location>
        <position position="119"/>
    </location>
</feature>
<feature type="sequence variant" id="VAR_005729" description="In VHLD; type II." evidence="42">
    <original>F</original>
    <variation>S</variation>
    <location>
        <position position="119"/>
    </location>
</feature>
<feature type="sequence variant" id="VAR_005730" description="In VHLD; type I; dbSNP:rs5030832." evidence="43">
    <original>D</original>
    <variation>G</variation>
    <location>
        <position position="121"/>
    </location>
</feature>
<feature type="sequence variant" id="VAR_034993" description="In PCC; requires 2 nucleotide substitutions." evidence="13">
    <original>A</original>
    <variation>I</variation>
    <location>
        <position position="122"/>
    </location>
</feature>
<feature type="sequence variant" id="VAR_034994" description="In ECYT2; dbSNP:rs104893831." evidence="19">
    <original>D</original>
    <variation>Y</variation>
    <location>
        <position position="126"/>
    </location>
</feature>
<feature type="sequence variant" id="VAR_005731" description="In VHLD; type II; dbSNP:rs1553619956." evidence="48">
    <original>L</original>
    <variation>F</variation>
    <location>
        <position position="128"/>
    </location>
</feature>
<feature type="sequence variant" id="VAR_005732" description="In VHLD.">
    <original>L</original>
    <variation>LE</variation>
    <location>
        <position position="129"/>
    </location>
</feature>
<feature type="sequence variant" id="VAR_005733" description="In ECYT2 and VHLD; type I; dbSNP:rs104893830." evidence="19 43 51">
    <original>V</original>
    <variation>L</variation>
    <location>
        <position position="130"/>
    </location>
</feature>
<feature type="sequence variant" id="VAR_005734" description="In VHLD; type I; dbSNP:rs1064794272." evidence="51">
    <original>N</original>
    <variation>K</variation>
    <location>
        <position position="131"/>
    </location>
</feature>
<feature type="sequence variant" id="VAR_005735" description="In VHLD; type I." evidence="50">
    <original>N</original>
    <variation>T</variation>
    <location>
        <position position="131"/>
    </location>
</feature>
<feature type="sequence variant" id="VAR_034995" description="In hemangioblastoma; dbSNP:rs119103278." evidence="35">
    <original>L</original>
    <variation>F</variation>
    <location>
        <position position="135"/>
    </location>
</feature>
<feature type="sequence variant" id="VAR_005737" description="In PCC and VHLD; type II; dbSNP:rs5030833." evidence="13">
    <original>F</original>
    <variation>C</variation>
    <location>
        <position position="136"/>
    </location>
</feature>
<feature type="sequence variant" id="VAR_005736" description="In VHLD; dbSNP:rs5030833." evidence="51">
    <original>F</original>
    <variation>S</variation>
    <location>
        <position position="136"/>
    </location>
</feature>
<feature type="sequence variant" id="VAR_008099" description="In VHLD; dbSNP:rs5030833.">
    <original>F</original>
    <variation>Y</variation>
    <location>
        <position position="136"/>
    </location>
</feature>
<feature type="sequence variant" id="VAR_005738" description="In VHLD; type II; dbSNP:rs773556807." evidence="42">
    <original>D</original>
    <variation>E</variation>
    <location>
        <position position="143"/>
    </location>
</feature>
<feature type="sequence variant" id="VAR_008100" description="In VHLD; dbSNP:rs771727849.">
    <original>Q</original>
    <variation>H</variation>
    <location>
        <position position="145"/>
    </location>
</feature>
<feature type="sequence variant" id="VAR_034996" description="In PCC; dbSNP:rs1060503555." evidence="47">
    <original>I</original>
    <variation>T</variation>
    <location>
        <position position="147"/>
    </location>
</feature>
<feature type="sequence variant" id="VAR_005739" description="In VHLD; type I.">
    <location>
        <position position="148"/>
    </location>
</feature>
<feature type="sequence variant" id="VAR_005740" description="In VHLD; type II; dbSNP:rs587780077." evidence="46">
    <original>A</original>
    <variation>T</variation>
    <location>
        <position position="149"/>
    </location>
</feature>
<feature type="sequence variant" id="VAR_005741" description="In VHLD; type II; dbSNP:rs1399097617.">
    <original>P</original>
    <variation>L</variation>
    <location>
        <position position="154"/>
    </location>
</feature>
<feature type="sequence variant" id="VAR_005742" description="In VHLD; type II; dbSNP:rs2125130449." evidence="52">
    <original>V</original>
    <variation>G</variation>
    <location>
        <position position="155"/>
    </location>
</feature>
<feature type="sequence variant" id="VAR_008101" description="In VHLD; with RCC; dbSNP:rs869025659.">
    <original>V</original>
    <variation>M</variation>
    <location>
        <position position="155"/>
    </location>
</feature>
<feature type="sequence variant" id="VAR_005743" description="In PCC and VHLD; type I; dbSNP:rs397516441." evidence="13 21 51">
    <original>Y</original>
    <variation>C</variation>
    <location>
        <position position="156"/>
    </location>
</feature>
<feature type="sequence variant" id="VAR_005744" description="In VHLD; type I; dbSNP:rs2125130454." evidence="51">
    <original>Y</original>
    <variation>D</variation>
    <location>
        <position position="156"/>
    </location>
</feature>
<feature type="sequence variant" id="VAR_034997" description="In PCC; dbSNP:rs2125130454." evidence="13">
    <original>Y</original>
    <variation>N</variation>
    <location>
        <position position="156"/>
    </location>
</feature>
<feature type="sequence variant" id="VAR_005746" description="In VHLD; type II; dbSNP:rs869025660." evidence="51 52">
    <original>T</original>
    <variation>I</variation>
    <location>
        <position position="157"/>
    </location>
</feature>
<feature type="sequence variant" id="VAR_005747" description="In VHLD; type I.">
    <original>T</original>
    <variation>TF</variation>
    <location>
        <position position="157"/>
    </location>
</feature>
<feature type="sequence variant" id="VAR_005748" description="In VHLD; type I-II; abolishes release from chaperonin complex and the interaction with Elongin BC complex; dbSNP:rs121913346." evidence="7 43 51">
    <original>L</original>
    <variation>P</variation>
    <location>
        <position position="158"/>
    </location>
</feature>
<feature type="sequence variant" id="VAR_005749" description="In VHLD; type I; dbSNP:rs1559429613." evidence="43">
    <original>L</original>
    <variation>V</variation>
    <location>
        <position position="158"/>
    </location>
</feature>
<feature type="sequence variant" id="VAR_005750" description="In VHLD; type II; dbSNP:rs1575932011.">
    <original>K</original>
    <variation>E</variation>
    <location>
        <position position="159"/>
    </location>
</feature>
<feature type="sequence variant" id="VAR_005753" description="In VHLD; type II; dbSNP:rs5030818.">
    <original>R</original>
    <variation>G</variation>
    <location>
        <position position="161"/>
    </location>
</feature>
<feature type="sequence variant" id="VAR_005752" description="In PCC and VHLD; type I; dbSNP:rs730882035." evidence="13 43">
    <original>R</original>
    <variation>P</variation>
    <location>
        <position position="161"/>
    </location>
</feature>
<feature type="sequence variant" id="VAR_005751" description="In PCC and VHLD; type II; dbSNP:rs730882035." evidence="13 51">
    <original>R</original>
    <variation>Q</variation>
    <location>
        <position position="161"/>
    </location>
</feature>
<feature type="sequence variant" id="VAR_005754" description="In VHLD; type I; No effect on interaction with HIF1A nor on HIF1A degradation; dbSNP:rs397516444." evidence="8 43 45 50">
    <original>C</original>
    <variation>F</variation>
    <location>
        <position position="162"/>
    </location>
</feature>
<feature type="sequence variant" id="VAR_005755" description="In VHLD; type I; dbSNP:rs1553620313." evidence="43">
    <original>C</original>
    <variation>R</variation>
    <location>
        <position position="162"/>
    </location>
</feature>
<feature type="sequence variant" id="VAR_005756" description="In VHLD; type I-II; dbSNP:rs5030622." evidence="43 51">
    <original>C</original>
    <variation>W</variation>
    <location>
        <position position="162"/>
    </location>
</feature>
<feature type="sequence variant" id="VAR_005757" description="In VHLD; type I; dbSNP:rs397516444." evidence="43">
    <original>C</original>
    <variation>Y</variation>
    <location>
        <position position="162"/>
    </location>
</feature>
<feature type="sequence variant" id="VAR_034998" description="In RCC; with paraneoplastic erythrocytosis; inhibits binding to HIF1AN; dbSNP:rs28940297." evidence="12 53">
    <original>L</original>
    <variation>P</variation>
    <location>
        <position position="163"/>
    </location>
</feature>
<feature type="sequence variant" id="VAR_008102" description="In VHLD; dbSNP:rs1352275281.">
    <original>Q</original>
    <variation>H</variation>
    <location>
        <position position="164"/>
    </location>
</feature>
<feature type="sequence variant" id="VAR_005758" description="In VHLD; type II; dbSNP:rs267607170." evidence="42 43">
    <original>Q</original>
    <variation>R</variation>
    <location>
        <position position="164"/>
    </location>
</feature>
<feature type="sequence variant" id="VAR_008103" description="In VHLD; with RCC; dbSNP:rs397516445.">
    <original>V</original>
    <variation>D</variation>
    <location>
        <position position="166"/>
    </location>
</feature>
<feature type="sequence variant" id="VAR_005759" description="In VHLD; type IIA; dbSNP:rs104893825." evidence="40 51">
    <original>V</original>
    <variation>F</variation>
    <location>
        <position position="166"/>
    </location>
</feature>
<feature type="sequence variant" id="VAR_005760" description="In VHLD; type I-II; dbSNP:rs5030820." evidence="50">
    <original>R</original>
    <variation>G</variation>
    <location>
        <position position="167"/>
    </location>
</feature>
<feature type="sequence variant" id="VAR_005761" description="In PCC and VHLD; type II; common mutation; dbSNP:rs5030821." evidence="13 43 51">
    <original>R</original>
    <variation>Q</variation>
    <location>
        <position position="167"/>
    </location>
</feature>
<feature type="sequence variant" id="VAR_005762" description="In PCC and VHLD; type II; common mutation; dbSNP:rs5030820." evidence="13 37 43 51">
    <original>R</original>
    <variation>W</variation>
    <location>
        <position position="167"/>
    </location>
</feature>
<feature type="sequence variant" id="VAR_005763" description="In VHLD; type II; dbSNP:rs864321642." evidence="40">
    <original>V</original>
    <variation>D</variation>
    <location>
        <position position="170"/>
    </location>
</feature>
<feature type="sequence variant" id="VAR_005764" description="In VHLD; type II; dbSNP:rs1553620326." evidence="34">
    <original>V</original>
    <variation>F</variation>
    <location>
        <position position="170"/>
    </location>
</feature>
<feature type="sequence variant" id="VAR_005765" description="In VHLD; type I; dbSNP:rs864321642." evidence="43 51">
    <original>V</original>
    <variation>G</variation>
    <location>
        <position position="170"/>
    </location>
</feature>
<feature type="sequence variant" id="VAR_005766" description="In VHLD; type I." evidence="50">
    <original>Y</original>
    <variation>D</variation>
    <location>
        <position position="175"/>
    </location>
</feature>
<feature type="sequence variant" id="VAR_008104" description="In VHLD.">
    <original>R</original>
    <variation>W</variation>
    <location>
        <position position="176"/>
    </location>
</feature>
<feature type="sequence variant" id="VAR_005767" description="In VHLD; type I.">
    <original>R</original>
    <variation>RLRVKPE</variation>
    <location>
        <position position="177"/>
    </location>
</feature>
<feature type="sequence variant" id="VAR_005768" description="In VHLD; type I-II; common mutation; dbSNP:rs5030822." evidence="43">
    <original>L</original>
    <variation>P</variation>
    <location>
        <position position="178"/>
    </location>
</feature>
<feature type="sequence variant" id="VAR_005769" description="In VHLD; type II; dbSNP:rs5030822." evidence="39">
    <original>L</original>
    <variation>Q</variation>
    <location>
        <position position="178"/>
    </location>
</feature>
<feature type="sequence variant" id="VAR_005770" description="In VHLD; type I; dbSNP:rs377715747." evidence="43">
    <original>I</original>
    <variation>V</variation>
    <location>
        <position position="180"/>
    </location>
</feature>
<feature type="sequence variant" id="VAR_005772" description="In VHLD; type I; dbSNP:rs1064793878." evidence="43 50">
    <original>L</original>
    <variation>P</variation>
    <location>
        <position position="184"/>
    </location>
</feature>
<feature type="sequence variant" id="VAR_005771" description="In VHLD; type I; dbSNP:rs1064793878." evidence="43">
    <original>L</original>
    <variation>R</variation>
    <location>
        <position position="184"/>
    </location>
</feature>
<feature type="sequence variant" id="VAR_005773" description="In VHLD; type I; dbSNP:rs367545984." evidence="43 50">
    <original>E</original>
    <variation>K</variation>
    <location>
        <position position="186"/>
    </location>
</feature>
<feature type="sequence variant" id="VAR_005774" description="In VHLD; dbSNP:rs1559429813." evidence="40">
    <location>
        <position position="186"/>
    </location>
</feature>
<feature type="sequence variant" id="VAR_005775" description="In VHLD; type I-II; dbSNP:rs1559429824." evidence="51">
    <original>L</original>
    <variation>P</variation>
    <location>
        <position position="188"/>
    </location>
</feature>
<feature type="sequence variant" id="VAR_005776" description="In VHLD; type I; dbSNP:rs1559429824." evidence="43">
    <original>L</original>
    <variation>Q</variation>
    <location>
        <position position="188"/>
    </location>
</feature>
<feature type="sequence variant" id="VAR_005777" description="In ECYT2, PCC and VHLD; type IIA; uncertain significance; dbSNP:rs5030824." evidence="13 20">
    <original>L</original>
    <variation>V</variation>
    <location>
        <position position="188"/>
    </location>
</feature>
<feature type="sequence variant" id="VAR_034999" description="In ECYT2; dbSNP:rs28940301." evidence="20">
    <original>H</original>
    <variation>D</variation>
    <location>
        <position position="191"/>
    </location>
</feature>
<feature type="sequence variant" id="VAR_035000" description="In ECYT2; dbSNP:rs28940300." evidence="20">
    <original>P</original>
    <variation>S</variation>
    <location>
        <position position="192"/>
    </location>
</feature>
<feature type="sequence variant" id="VAR_035001" description="In PCC; dbSNP:rs869025667." evidence="13">
    <original>L</original>
    <variation>Q</variation>
    <location>
        <position position="198"/>
    </location>
</feature>
<feature type="sequence variant" id="VAR_005778" description="In ECYT2 and VHLD; type II.">
    <original>L</original>
    <variation>R</variation>
    <location>
        <position position="198"/>
    </location>
</feature>
<feature type="sequence variant" id="VAR_005779" description="In ECYT2 and VHLD; type I; dbSNP:rs28940298." evidence="19 20 43 51">
    <original>R</original>
    <variation>W</variation>
    <location>
        <position position="200"/>
    </location>
</feature>
<feature type="mutagenesis site" description="No interaction with HIF1A. No HIF1A degradation." evidence="8">
    <original>Y</original>
    <variation>N</variation>
    <location>
        <position position="98"/>
    </location>
</feature>
<feature type="strand" evidence="60">
    <location>
        <begin position="62"/>
        <end position="64"/>
    </location>
</feature>
<feature type="strand" evidence="59">
    <location>
        <begin position="71"/>
        <end position="78"/>
    </location>
</feature>
<feature type="strand" evidence="59">
    <location>
        <begin position="80"/>
        <end position="82"/>
    </location>
</feature>
<feature type="strand" evidence="59">
    <location>
        <begin position="84"/>
        <end position="89"/>
    </location>
</feature>
<feature type="strand" evidence="57">
    <location>
        <begin position="91"/>
        <end position="93"/>
    </location>
</feature>
<feature type="strand" evidence="59">
    <location>
        <begin position="95"/>
        <end position="97"/>
    </location>
</feature>
<feature type="strand" evidence="59">
    <location>
        <begin position="106"/>
        <end position="112"/>
    </location>
</feature>
<feature type="strand" evidence="59">
    <location>
        <begin position="116"/>
        <end position="121"/>
    </location>
</feature>
<feature type="turn" evidence="59">
    <location>
        <begin position="122"/>
        <end position="124"/>
    </location>
</feature>
<feature type="strand" evidence="63">
    <location>
        <begin position="127"/>
        <end position="130"/>
    </location>
</feature>
<feature type="strand" evidence="62">
    <location>
        <begin position="133"/>
        <end position="136"/>
    </location>
</feature>
<feature type="helix" evidence="58">
    <location>
        <begin position="142"/>
        <end position="144"/>
    </location>
</feature>
<feature type="strand" evidence="59">
    <location>
        <begin position="147"/>
        <end position="152"/>
    </location>
</feature>
<feature type="helix" evidence="59">
    <location>
        <begin position="158"/>
        <end position="169"/>
    </location>
</feature>
<feature type="helix" evidence="59">
    <location>
        <begin position="172"/>
        <end position="177"/>
    </location>
</feature>
<feature type="strand" evidence="59">
    <location>
        <begin position="178"/>
        <end position="180"/>
    </location>
</feature>
<feature type="helix" evidence="59">
    <location>
        <begin position="183"/>
        <end position="189"/>
    </location>
</feature>
<feature type="helix" evidence="59">
    <location>
        <begin position="194"/>
        <end position="201"/>
    </location>
</feature>
<feature type="helix" evidence="61">
    <location>
        <begin position="205"/>
        <end position="209"/>
    </location>
</feature>
<keyword id="KW-0002">3D-structure</keyword>
<keyword id="KW-0024">Alternative initiation</keyword>
<keyword id="KW-0025">Alternative splicing</keyword>
<keyword id="KW-1003">Cell membrane</keyword>
<keyword id="KW-0985">Congenital erythrocytosis</keyword>
<keyword id="KW-0963">Cytoplasm</keyword>
<keyword id="KW-0225">Disease variant</keyword>
<keyword id="KW-0256">Endoplasmic reticulum</keyword>
<keyword id="KW-0472">Membrane</keyword>
<keyword id="KW-0539">Nucleus</keyword>
<keyword id="KW-1267">Proteomics identification</keyword>
<keyword id="KW-1185">Reference proteome</keyword>
<keyword id="KW-0677">Repeat</keyword>
<keyword id="KW-0043">Tumor suppressor</keyword>
<keyword id="KW-0833">Ubl conjugation pathway</keyword>
<dbReference type="EMBL" id="AF010238">
    <property type="protein sequence ID" value="AAB64200.1"/>
    <property type="molecule type" value="Genomic_DNA"/>
</dbReference>
<dbReference type="EMBL" id="L15409">
    <property type="status" value="NOT_ANNOTATED_CDS"/>
    <property type="molecule type" value="mRNA"/>
</dbReference>
<dbReference type="EMBL" id="AK315799">
    <property type="protein sequence ID" value="BAG38142.1"/>
    <property type="molecule type" value="mRNA"/>
</dbReference>
<dbReference type="EMBL" id="AC034193">
    <property type="status" value="NOT_ANNOTATED_CDS"/>
    <property type="molecule type" value="Genomic_DNA"/>
</dbReference>
<dbReference type="EMBL" id="CH471055">
    <property type="protein sequence ID" value="EAW64064.1"/>
    <property type="molecule type" value="Genomic_DNA"/>
</dbReference>
<dbReference type="EMBL" id="BC058831">
    <property type="protein sequence ID" value="AAH58831.1"/>
    <property type="molecule type" value="mRNA"/>
</dbReference>
<dbReference type="EMBL" id="U54612">
    <property type="protein sequence ID" value="AAA98614.1"/>
    <property type="molecule type" value="Genomic_DNA"/>
</dbReference>
<dbReference type="EMBL" id="X96489">
    <property type="protein sequence ID" value="CAA65343.1"/>
    <property type="molecule type" value="Genomic_DNA"/>
</dbReference>
<dbReference type="CCDS" id="CCDS2597.1">
    <molecule id="P40337-1"/>
</dbReference>
<dbReference type="CCDS" id="CCDS2598.1">
    <molecule id="P40337-2"/>
</dbReference>
<dbReference type="PIR" id="I38926">
    <property type="entry name" value="I38926"/>
</dbReference>
<dbReference type="RefSeq" id="NP_000542.1">
    <molecule id="P40337-1"/>
    <property type="nucleotide sequence ID" value="NM_000551.4"/>
</dbReference>
<dbReference type="RefSeq" id="NP_937799.1">
    <molecule id="P40337-2"/>
    <property type="nucleotide sequence ID" value="NM_198156.3"/>
</dbReference>
<dbReference type="PDB" id="1LM8">
    <property type="method" value="X-ray"/>
    <property type="resolution" value="1.85 A"/>
    <property type="chains" value="V=54-213"/>
</dbReference>
<dbReference type="PDB" id="1LQB">
    <property type="method" value="X-ray"/>
    <property type="resolution" value="2.00 A"/>
    <property type="chains" value="C=54-213"/>
</dbReference>
<dbReference type="PDB" id="1VCB">
    <property type="method" value="X-ray"/>
    <property type="resolution" value="2.70 A"/>
    <property type="chains" value="C/F/I/L=54-213"/>
</dbReference>
<dbReference type="PDB" id="3ZRC">
    <property type="method" value="X-ray"/>
    <property type="resolution" value="2.90 A"/>
    <property type="chains" value="C/F/I/L=54-213"/>
</dbReference>
<dbReference type="PDB" id="3ZRF">
    <property type="method" value="X-ray"/>
    <property type="resolution" value="2.80 A"/>
    <property type="chains" value="C/F/I/L=54-213"/>
</dbReference>
<dbReference type="PDB" id="3ZTC">
    <property type="method" value="X-ray"/>
    <property type="resolution" value="2.65 A"/>
    <property type="chains" value="C/F/I/L=54-213"/>
</dbReference>
<dbReference type="PDB" id="3ZTD">
    <property type="method" value="X-ray"/>
    <property type="resolution" value="2.79 A"/>
    <property type="chains" value="C/F/I/L=54-213"/>
</dbReference>
<dbReference type="PDB" id="3ZUN">
    <property type="method" value="X-ray"/>
    <property type="resolution" value="2.50 A"/>
    <property type="chains" value="C/F/I/L=54-213"/>
</dbReference>
<dbReference type="PDB" id="4AJY">
    <property type="method" value="X-ray"/>
    <property type="resolution" value="1.73 A"/>
    <property type="chains" value="V=54-213"/>
</dbReference>
<dbReference type="PDB" id="4AWJ">
    <property type="method" value="X-ray"/>
    <property type="resolution" value="2.50 A"/>
    <property type="chains" value="C/F/I/L=54-213"/>
</dbReference>
<dbReference type="PDB" id="4B95">
    <property type="method" value="X-ray"/>
    <property type="resolution" value="2.80 A"/>
    <property type="chains" value="C/F/I/L=54-213"/>
</dbReference>
<dbReference type="PDB" id="4B9K">
    <property type="method" value="X-ray"/>
    <property type="resolution" value="2.00 A"/>
    <property type="chains" value="C/F/I/L=54-213"/>
</dbReference>
<dbReference type="PDB" id="4BKS">
    <property type="method" value="X-ray"/>
    <property type="resolution" value="2.20 A"/>
    <property type="chains" value="C/F/I/L=54-213"/>
</dbReference>
<dbReference type="PDB" id="4BKT">
    <property type="method" value="X-ray"/>
    <property type="resolution" value="2.35 A"/>
    <property type="chains" value="C/F/I/L=54-213"/>
</dbReference>
<dbReference type="PDB" id="4W9C">
    <property type="method" value="X-ray"/>
    <property type="resolution" value="2.20 A"/>
    <property type="chains" value="C/F/I/L=54-213"/>
</dbReference>
<dbReference type="PDB" id="4W9D">
    <property type="method" value="X-ray"/>
    <property type="resolution" value="2.20 A"/>
    <property type="chains" value="C/F/I/L=54-213"/>
</dbReference>
<dbReference type="PDB" id="4W9E">
    <property type="method" value="X-ray"/>
    <property type="resolution" value="2.60 A"/>
    <property type="chains" value="C/F/I/L=54-213"/>
</dbReference>
<dbReference type="PDB" id="4W9F">
    <property type="method" value="X-ray"/>
    <property type="resolution" value="2.10 A"/>
    <property type="chains" value="C/F/I/L=54-213"/>
</dbReference>
<dbReference type="PDB" id="4W9G">
    <property type="method" value="X-ray"/>
    <property type="resolution" value="2.70 A"/>
    <property type="chains" value="C/F/I/L=54-213"/>
</dbReference>
<dbReference type="PDB" id="4W9H">
    <property type="method" value="X-ray"/>
    <property type="resolution" value="2.10 A"/>
    <property type="chains" value="C/F/I/L=54-213"/>
</dbReference>
<dbReference type="PDB" id="4W9I">
    <property type="method" value="X-ray"/>
    <property type="resolution" value="2.40 A"/>
    <property type="chains" value="C/F/I/L=54-213"/>
</dbReference>
<dbReference type="PDB" id="4W9J">
    <property type="method" value="X-ray"/>
    <property type="resolution" value="2.20 A"/>
    <property type="chains" value="C/F/I/L=54-213"/>
</dbReference>
<dbReference type="PDB" id="4W9K">
    <property type="method" value="X-ray"/>
    <property type="resolution" value="2.10 A"/>
    <property type="chains" value="C/F/I/L=54-213"/>
</dbReference>
<dbReference type="PDB" id="4W9L">
    <property type="method" value="X-ray"/>
    <property type="resolution" value="2.20 A"/>
    <property type="chains" value="C/F/I/L=54-213"/>
</dbReference>
<dbReference type="PDB" id="4WQO">
    <property type="method" value="X-ray"/>
    <property type="resolution" value="3.20 A"/>
    <property type="chains" value="A=1-213"/>
</dbReference>
<dbReference type="PDB" id="5LLI">
    <property type="method" value="X-ray"/>
    <property type="resolution" value="2.40 A"/>
    <property type="chains" value="C/F/I/L=54-213"/>
</dbReference>
<dbReference type="PDB" id="5N4W">
    <property type="method" value="X-ray"/>
    <property type="resolution" value="3.90 A"/>
    <property type="chains" value="V=54-213"/>
</dbReference>
<dbReference type="PDB" id="5NVV">
    <property type="method" value="X-ray"/>
    <property type="resolution" value="2.10 A"/>
    <property type="chains" value="C/F/I/L=54-213"/>
</dbReference>
<dbReference type="PDB" id="5NVW">
    <property type="method" value="X-ray"/>
    <property type="resolution" value="2.20 A"/>
    <property type="chains" value="C/F/I/L=54-213"/>
</dbReference>
<dbReference type="PDB" id="5NVX">
    <property type="method" value="X-ray"/>
    <property type="resolution" value="2.20 A"/>
    <property type="chains" value="C/F/I/L=54-213"/>
</dbReference>
<dbReference type="PDB" id="5NVY">
    <property type="method" value="X-ray"/>
    <property type="resolution" value="2.90 A"/>
    <property type="chains" value="C/F/I/L=54-213"/>
</dbReference>
<dbReference type="PDB" id="5NVZ">
    <property type="method" value="X-ray"/>
    <property type="resolution" value="2.70 A"/>
    <property type="chains" value="C/F/I/L=54-213"/>
</dbReference>
<dbReference type="PDB" id="5NW0">
    <property type="method" value="X-ray"/>
    <property type="resolution" value="2.30 A"/>
    <property type="chains" value="C/F/I/L=54-213"/>
</dbReference>
<dbReference type="PDB" id="5NW1">
    <property type="method" value="X-ray"/>
    <property type="resolution" value="2.10 A"/>
    <property type="chains" value="C/F/I/L=54-213"/>
</dbReference>
<dbReference type="PDB" id="5NW2">
    <property type="method" value="X-ray"/>
    <property type="resolution" value="2.20 A"/>
    <property type="chains" value="C/F/I/L=54-213"/>
</dbReference>
<dbReference type="PDB" id="5T35">
    <property type="method" value="X-ray"/>
    <property type="resolution" value="2.70 A"/>
    <property type="chains" value="D/H=54-213"/>
</dbReference>
<dbReference type="PDB" id="6BVB">
    <property type="method" value="X-ray"/>
    <property type="resolution" value="2.00 A"/>
    <property type="chains" value="V=54-213"/>
</dbReference>
<dbReference type="PDB" id="6FMI">
    <property type="method" value="X-ray"/>
    <property type="resolution" value="2.80 A"/>
    <property type="chains" value="C/F=54-204"/>
</dbReference>
<dbReference type="PDB" id="6FMJ">
    <property type="method" value="X-ray"/>
    <property type="resolution" value="2.45 A"/>
    <property type="chains" value="C/F/I/L=54-204"/>
</dbReference>
<dbReference type="PDB" id="6FMK">
    <property type="method" value="X-ray"/>
    <property type="resolution" value="2.75 A"/>
    <property type="chains" value="C/F/I/L=54-204"/>
</dbReference>
<dbReference type="PDB" id="6GFX">
    <property type="method" value="X-ray"/>
    <property type="resolution" value="1.83 A"/>
    <property type="chains" value="C=54-213"/>
</dbReference>
<dbReference type="PDB" id="6GFY">
    <property type="method" value="X-ray"/>
    <property type="resolution" value="2.70 A"/>
    <property type="chains" value="C/F/I/L=54-213"/>
</dbReference>
<dbReference type="PDB" id="6GFZ">
    <property type="method" value="X-ray"/>
    <property type="resolution" value="2.30 A"/>
    <property type="chains" value="C/F/I/L=54-213"/>
</dbReference>
<dbReference type="PDB" id="6GMN">
    <property type="method" value="X-ray"/>
    <property type="resolution" value="1.94 A"/>
    <property type="chains" value="C/F/I/L=54-213"/>
</dbReference>
<dbReference type="PDB" id="6GMQ">
    <property type="method" value="X-ray"/>
    <property type="resolution" value="2.75 A"/>
    <property type="chains" value="C/F/I/L=54-213"/>
</dbReference>
<dbReference type="PDB" id="6GMR">
    <property type="method" value="X-ray"/>
    <property type="resolution" value="1.75 A"/>
    <property type="chains" value="V=54-213"/>
</dbReference>
<dbReference type="PDB" id="6GMX">
    <property type="method" value="X-ray"/>
    <property type="resolution" value="2.53 A"/>
    <property type="chains" value="C/F/I/L=54-213"/>
</dbReference>
<dbReference type="PDB" id="6HAX">
    <property type="method" value="X-ray"/>
    <property type="resolution" value="2.35 A"/>
    <property type="chains" value="B/F=54-213"/>
</dbReference>
<dbReference type="PDB" id="6HAY">
    <property type="method" value="X-ray"/>
    <property type="resolution" value="2.24 A"/>
    <property type="chains" value="B/F=54-213"/>
</dbReference>
<dbReference type="PDB" id="6HR2">
    <property type="method" value="X-ray"/>
    <property type="resolution" value="1.76 A"/>
    <property type="chains" value="B/F=61-209"/>
</dbReference>
<dbReference type="PDB" id="6I7Q">
    <property type="method" value="X-ray"/>
    <property type="resolution" value="1.80 A"/>
    <property type="chains" value="V=54-213"/>
</dbReference>
<dbReference type="PDB" id="6I7R">
    <property type="method" value="X-ray"/>
    <property type="resolution" value="1.95 A"/>
    <property type="chains" value="V=54-213"/>
</dbReference>
<dbReference type="PDB" id="6R6H">
    <property type="method" value="EM"/>
    <property type="resolution" value="8.40 A"/>
    <property type="chains" value="V=60-207"/>
</dbReference>
<dbReference type="PDB" id="6R7F">
    <property type="method" value="EM"/>
    <property type="resolution" value="8.20 A"/>
    <property type="chains" value="V=54-213"/>
</dbReference>
<dbReference type="PDB" id="6SIS">
    <property type="method" value="X-ray"/>
    <property type="resolution" value="3.50 A"/>
    <property type="chains" value="D/H=54-213"/>
</dbReference>
<dbReference type="PDB" id="6ZHC">
    <property type="method" value="X-ray"/>
    <property type="resolution" value="1.92 A"/>
    <property type="chains" value="AAA=59-213"/>
</dbReference>
<dbReference type="PDB" id="7CJB">
    <property type="method" value="X-ray"/>
    <property type="resolution" value="2.80 A"/>
    <property type="chains" value="A/E/I/M=55-213"/>
</dbReference>
<dbReference type="PDB" id="7JTO">
    <property type="method" value="X-ray"/>
    <property type="resolution" value="1.70 A"/>
    <property type="chains" value="L=54-213"/>
</dbReference>
<dbReference type="PDB" id="7JTP">
    <property type="method" value="X-ray"/>
    <property type="resolution" value="2.12 A"/>
    <property type="chains" value="L=54-213"/>
</dbReference>
<dbReference type="PDB" id="7KHH">
    <property type="method" value="X-ray"/>
    <property type="resolution" value="2.28 A"/>
    <property type="chains" value="C=55-213"/>
</dbReference>
<dbReference type="PDB" id="7PI4">
    <property type="method" value="X-ray"/>
    <property type="resolution" value="2.24 A"/>
    <property type="chains" value="AAA=59-213"/>
</dbReference>
<dbReference type="PDB" id="7Q2J">
    <property type="method" value="X-ray"/>
    <property type="resolution" value="2.50 A"/>
    <property type="chains" value="C=54-213"/>
</dbReference>
<dbReference type="PDB" id="7S4E">
    <property type="method" value="X-ray"/>
    <property type="resolution" value="2.25 A"/>
    <property type="chains" value="B/F=54-213"/>
</dbReference>
<dbReference type="PDB" id="7Z6L">
    <property type="method" value="X-ray"/>
    <property type="resolution" value="2.24 A"/>
    <property type="chains" value="B=54-213"/>
</dbReference>
<dbReference type="PDB" id="7Z76">
    <property type="method" value="X-ray"/>
    <property type="resolution" value="1.32 A"/>
    <property type="chains" value="C=54-213"/>
</dbReference>
<dbReference type="PDB" id="7Z77">
    <property type="method" value="X-ray"/>
    <property type="resolution" value="1.97 A"/>
    <property type="chains" value="C=54-213"/>
</dbReference>
<dbReference type="PDB" id="7ZNT">
    <property type="method" value="X-ray"/>
    <property type="resolution" value="3.00 A"/>
    <property type="chains" value="C/F=54-213"/>
</dbReference>
<dbReference type="PDB" id="8BB2">
    <property type="method" value="X-ray"/>
    <property type="resolution" value="2.05 A"/>
    <property type="chains" value="L=54-213"/>
</dbReference>
<dbReference type="PDB" id="8BB3">
    <property type="method" value="X-ray"/>
    <property type="resolution" value="1.80 A"/>
    <property type="chains" value="L=54-213"/>
</dbReference>
<dbReference type="PDB" id="8BB4">
    <property type="method" value="X-ray"/>
    <property type="resolution" value="2.80 A"/>
    <property type="chains" value="P=54-213"/>
</dbReference>
<dbReference type="PDB" id="8BB5">
    <property type="method" value="X-ray"/>
    <property type="resolution" value="2.20 A"/>
    <property type="chains" value="C=54-213"/>
</dbReference>
<dbReference type="PDB" id="8BDI">
    <property type="method" value="X-ray"/>
    <property type="resolution" value="2.11 A"/>
    <property type="chains" value="C/F/I/L=54-213"/>
</dbReference>
<dbReference type="PDB" id="8BDJ">
    <property type="method" value="X-ray"/>
    <property type="resolution" value="2.02 A"/>
    <property type="chains" value="C/F/I/L=54-213"/>
</dbReference>
<dbReference type="PDB" id="8BDL">
    <property type="method" value="X-ray"/>
    <property type="resolution" value="2.29 A"/>
    <property type="chains" value="C/F/I/L=54-213"/>
</dbReference>
<dbReference type="PDB" id="8BDM">
    <property type="method" value="X-ray"/>
    <property type="resolution" value="2.02 A"/>
    <property type="chains" value="C/F/I/L=54-213"/>
</dbReference>
<dbReference type="PDB" id="8BDN">
    <property type="method" value="X-ray"/>
    <property type="resolution" value="2.76 A"/>
    <property type="chains" value="C/F/I/L=54-213"/>
</dbReference>
<dbReference type="PDB" id="8BDO">
    <property type="method" value="X-ray"/>
    <property type="resolution" value="2.80 A"/>
    <property type="chains" value="C/F=54-213"/>
</dbReference>
<dbReference type="PDB" id="8BDS">
    <property type="method" value="X-ray"/>
    <property type="resolution" value="1.72 A"/>
    <property type="chains" value="C=54-213"/>
</dbReference>
<dbReference type="PDB" id="8BDT">
    <property type="method" value="X-ray"/>
    <property type="resolution" value="2.70 A"/>
    <property type="chains" value="D/H=54-213"/>
</dbReference>
<dbReference type="PDB" id="8BDX">
    <property type="method" value="X-ray"/>
    <property type="resolution" value="2.93 A"/>
    <property type="chains" value="D/H=54-213"/>
</dbReference>
<dbReference type="PDB" id="8BEB">
    <property type="method" value="X-ray"/>
    <property type="resolution" value="3.18 A"/>
    <property type="chains" value="C=54-213"/>
</dbReference>
<dbReference type="PDB" id="8C13">
    <property type="method" value="X-ray"/>
    <property type="resolution" value="2.30 A"/>
    <property type="chains" value="L=54-213"/>
</dbReference>
<dbReference type="PDB" id="8CQE">
    <property type="method" value="X-ray"/>
    <property type="resolution" value="2.85 A"/>
    <property type="chains" value="C/F/I/L=54-213"/>
</dbReference>
<dbReference type="PDB" id="8CQK">
    <property type="method" value="X-ray"/>
    <property type="resolution" value="2.62 A"/>
    <property type="chains" value="C/F/I/L=54-213"/>
</dbReference>
<dbReference type="PDB" id="8CQL">
    <property type="method" value="X-ray"/>
    <property type="resolution" value="2.38 A"/>
    <property type="chains" value="C/F/I/L=54-213"/>
</dbReference>
<dbReference type="PDB" id="8EI3">
    <property type="method" value="X-ray"/>
    <property type="resolution" value="3.49 A"/>
    <property type="chains" value="C/F=54-213"/>
</dbReference>
<dbReference type="PDB" id="8EWV">
    <property type="method" value="X-ray"/>
    <property type="resolution" value="3.40 A"/>
    <property type="chains" value="C/G/K/O/S/W=54-213"/>
</dbReference>
<dbReference type="PDB" id="8FY0">
    <property type="method" value="X-ray"/>
    <property type="resolution" value="2.94 A"/>
    <property type="chains" value="A=54-213"/>
</dbReference>
<dbReference type="PDB" id="8FY1">
    <property type="method" value="X-ray"/>
    <property type="resolution" value="2.56 A"/>
    <property type="chains" value="A=54-213"/>
</dbReference>
<dbReference type="PDB" id="8FY2">
    <property type="method" value="X-ray"/>
    <property type="resolution" value="2.98 A"/>
    <property type="chains" value="A=54-213"/>
</dbReference>
<dbReference type="PDB" id="8G1P">
    <property type="method" value="X-ray"/>
    <property type="resolution" value="2.70 A"/>
    <property type="chains" value="C/F=56-213"/>
</dbReference>
<dbReference type="PDB" id="8G1Q">
    <property type="method" value="X-ray"/>
    <property type="resolution" value="3.73 A"/>
    <property type="chains" value="C=56-213"/>
</dbReference>
<dbReference type="PDB" id="8P0F">
    <property type="method" value="X-ray"/>
    <property type="resolution" value="1.98 A"/>
    <property type="chains" value="A/D=54-213"/>
</dbReference>
<dbReference type="PDB" id="8PC2">
    <property type="method" value="X-ray"/>
    <property type="resolution" value="2.80 A"/>
    <property type="chains" value="A/B=54-213"/>
</dbReference>
<dbReference type="PDB" id="8QJR">
    <property type="method" value="X-ray"/>
    <property type="resolution" value="3.17 A"/>
    <property type="chains" value="C/F=54-213"/>
</dbReference>
<dbReference type="PDB" id="8QJS">
    <property type="method" value="X-ray"/>
    <property type="resolution" value="3.19 A"/>
    <property type="chains" value="C/F/I/L=54-213"/>
</dbReference>
<dbReference type="PDB" id="8QU8">
    <property type="method" value="EM"/>
    <property type="resolution" value="3.50 A"/>
    <property type="chains" value="A=2-213"/>
</dbReference>
<dbReference type="PDB" id="8QVU">
    <property type="method" value="X-ray"/>
    <property type="resolution" value="2.24 A"/>
    <property type="chains" value="B/F=1-213"/>
</dbReference>
<dbReference type="PDB" id="8QW6">
    <property type="method" value="X-ray"/>
    <property type="resolution" value="2.20 A"/>
    <property type="chains" value="B/F=54-213"/>
</dbReference>
<dbReference type="PDB" id="8QW7">
    <property type="method" value="X-ray"/>
    <property type="resolution" value="2.36 A"/>
    <property type="chains" value="B/F=54-213"/>
</dbReference>
<dbReference type="PDB" id="8R5H">
    <property type="method" value="EM"/>
    <property type="resolution" value="3.44 A"/>
    <property type="chains" value="H=54-213"/>
</dbReference>
<dbReference type="PDB" id="8RWZ">
    <property type="method" value="EM"/>
    <property type="resolution" value="4.00 A"/>
    <property type="chains" value="B=54-213"/>
</dbReference>
<dbReference type="PDB" id="8RX0">
    <property type="method" value="EM"/>
    <property type="resolution" value="3.70 A"/>
    <property type="chains" value="B=54-213"/>
</dbReference>
<dbReference type="PDB" id="8VL9">
    <property type="method" value="X-ray"/>
    <property type="resolution" value="2.50 A"/>
    <property type="chains" value="A=54-213"/>
</dbReference>
<dbReference type="PDB" id="8VLB">
    <property type="method" value="X-ray"/>
    <property type="resolution" value="2.90 A"/>
    <property type="chains" value="A=54-213"/>
</dbReference>
<dbReference type="PDB" id="8WDK">
    <property type="method" value="EM"/>
    <property type="resolution" value="3.64 A"/>
    <property type="chains" value="V=59-213"/>
</dbReference>
<dbReference type="PDB" id="8YMB">
    <property type="method" value="X-ray"/>
    <property type="resolution" value="2.95 A"/>
    <property type="chains" value="D/I=55-213"/>
</dbReference>
<dbReference type="PDB" id="8ZV8">
    <property type="method" value="X-ray"/>
    <property type="resolution" value="2.46 A"/>
    <property type="chains" value="C/F/I/L=54-213"/>
</dbReference>
<dbReference type="PDB" id="8ZVJ">
    <property type="method" value="X-ray"/>
    <property type="resolution" value="2.60 A"/>
    <property type="chains" value="C/F/I/L=54-213"/>
</dbReference>
<dbReference type="PDB" id="9BJU">
    <property type="method" value="X-ray"/>
    <property type="resolution" value="2.47 A"/>
    <property type="chains" value="C/F/I/L=54-213"/>
</dbReference>
<dbReference type="PDB" id="9BOL">
    <property type="method" value="X-ray"/>
    <property type="resolution" value="1.99 A"/>
    <property type="chains" value="C/F=54-213"/>
</dbReference>
<dbReference type="PDB" id="9EQJ">
    <property type="method" value="X-ray"/>
    <property type="resolution" value="2.05 A"/>
    <property type="chains" value="C/F=54-213"/>
</dbReference>
<dbReference type="PDB" id="9EQM">
    <property type="method" value="X-ray"/>
    <property type="resolution" value="2.19 A"/>
    <property type="chains" value="C=54-213"/>
</dbReference>
<dbReference type="PDB" id="9IPW">
    <property type="method" value="X-ray"/>
    <property type="resolution" value="3.00 A"/>
    <property type="chains" value="C/F/I/L=54-213"/>
</dbReference>
<dbReference type="PDBsum" id="1LM8"/>
<dbReference type="PDBsum" id="1LQB"/>
<dbReference type="PDBsum" id="1VCB"/>
<dbReference type="PDBsum" id="3ZRC"/>
<dbReference type="PDBsum" id="3ZRF"/>
<dbReference type="PDBsum" id="3ZTC"/>
<dbReference type="PDBsum" id="3ZTD"/>
<dbReference type="PDBsum" id="3ZUN"/>
<dbReference type="PDBsum" id="4AJY"/>
<dbReference type="PDBsum" id="4AWJ"/>
<dbReference type="PDBsum" id="4B95"/>
<dbReference type="PDBsum" id="4B9K"/>
<dbReference type="PDBsum" id="4BKS"/>
<dbReference type="PDBsum" id="4BKT"/>
<dbReference type="PDBsum" id="4W9C"/>
<dbReference type="PDBsum" id="4W9D"/>
<dbReference type="PDBsum" id="4W9E"/>
<dbReference type="PDBsum" id="4W9F"/>
<dbReference type="PDBsum" id="4W9G"/>
<dbReference type="PDBsum" id="4W9H"/>
<dbReference type="PDBsum" id="4W9I"/>
<dbReference type="PDBsum" id="4W9J"/>
<dbReference type="PDBsum" id="4W9K"/>
<dbReference type="PDBsum" id="4W9L"/>
<dbReference type="PDBsum" id="4WQO"/>
<dbReference type="PDBsum" id="5LLI"/>
<dbReference type="PDBsum" id="5N4W"/>
<dbReference type="PDBsum" id="5NVV"/>
<dbReference type="PDBsum" id="5NVW"/>
<dbReference type="PDBsum" id="5NVX"/>
<dbReference type="PDBsum" id="5NVY"/>
<dbReference type="PDBsum" id="5NVZ"/>
<dbReference type="PDBsum" id="5NW0"/>
<dbReference type="PDBsum" id="5NW1"/>
<dbReference type="PDBsum" id="5NW2"/>
<dbReference type="PDBsum" id="5T35"/>
<dbReference type="PDBsum" id="6BVB"/>
<dbReference type="PDBsum" id="6FMI"/>
<dbReference type="PDBsum" id="6FMJ"/>
<dbReference type="PDBsum" id="6FMK"/>
<dbReference type="PDBsum" id="6GFX"/>
<dbReference type="PDBsum" id="6GFY"/>
<dbReference type="PDBsum" id="6GFZ"/>
<dbReference type="PDBsum" id="6GMN"/>
<dbReference type="PDBsum" id="6GMQ"/>
<dbReference type="PDBsum" id="6GMR"/>
<dbReference type="PDBsum" id="6GMX"/>
<dbReference type="PDBsum" id="6HAX"/>
<dbReference type="PDBsum" id="6HAY"/>
<dbReference type="PDBsum" id="6HR2"/>
<dbReference type="PDBsum" id="6I7Q"/>
<dbReference type="PDBsum" id="6I7R"/>
<dbReference type="PDBsum" id="6R6H"/>
<dbReference type="PDBsum" id="6R7F"/>
<dbReference type="PDBsum" id="6SIS"/>
<dbReference type="PDBsum" id="6ZHC"/>
<dbReference type="PDBsum" id="7CJB"/>
<dbReference type="PDBsum" id="7JTO"/>
<dbReference type="PDBsum" id="7JTP"/>
<dbReference type="PDBsum" id="7KHH"/>
<dbReference type="PDBsum" id="7PI4"/>
<dbReference type="PDBsum" id="7Q2J"/>
<dbReference type="PDBsum" id="7S4E"/>
<dbReference type="PDBsum" id="7Z6L"/>
<dbReference type="PDBsum" id="7Z76"/>
<dbReference type="PDBsum" id="7Z77"/>
<dbReference type="PDBsum" id="7ZNT"/>
<dbReference type="PDBsum" id="8BB2"/>
<dbReference type="PDBsum" id="8BB3"/>
<dbReference type="PDBsum" id="8BB4"/>
<dbReference type="PDBsum" id="8BB5"/>
<dbReference type="PDBsum" id="8BDI"/>
<dbReference type="PDBsum" id="8BDJ"/>
<dbReference type="PDBsum" id="8BDL"/>
<dbReference type="PDBsum" id="8BDM"/>
<dbReference type="PDBsum" id="8BDN"/>
<dbReference type="PDBsum" id="8BDO"/>
<dbReference type="PDBsum" id="8BDS"/>
<dbReference type="PDBsum" id="8BDT"/>
<dbReference type="PDBsum" id="8BDX"/>
<dbReference type="PDBsum" id="8BEB"/>
<dbReference type="PDBsum" id="8C13"/>
<dbReference type="PDBsum" id="8CQE"/>
<dbReference type="PDBsum" id="8CQK"/>
<dbReference type="PDBsum" id="8CQL"/>
<dbReference type="PDBsum" id="8EI3"/>
<dbReference type="PDBsum" id="8EWV"/>
<dbReference type="PDBsum" id="8FY0"/>
<dbReference type="PDBsum" id="8FY1"/>
<dbReference type="PDBsum" id="8FY2"/>
<dbReference type="PDBsum" id="8G1P"/>
<dbReference type="PDBsum" id="8G1Q"/>
<dbReference type="PDBsum" id="8P0F"/>
<dbReference type="PDBsum" id="8PC2"/>
<dbReference type="PDBsum" id="8QJR"/>
<dbReference type="PDBsum" id="8QJS"/>
<dbReference type="PDBsum" id="8QU8"/>
<dbReference type="PDBsum" id="8QVU"/>
<dbReference type="PDBsum" id="8QW6"/>
<dbReference type="PDBsum" id="8QW7"/>
<dbReference type="PDBsum" id="8R5H"/>
<dbReference type="PDBsum" id="8RWZ"/>
<dbReference type="PDBsum" id="8RX0"/>
<dbReference type="PDBsum" id="8VL9"/>
<dbReference type="PDBsum" id="8VLB"/>
<dbReference type="PDBsum" id="8WDK"/>
<dbReference type="PDBsum" id="8YMB"/>
<dbReference type="PDBsum" id="8ZV8"/>
<dbReference type="PDBsum" id="8ZVJ"/>
<dbReference type="PDBsum" id="9BJU"/>
<dbReference type="PDBsum" id="9BOL"/>
<dbReference type="PDBsum" id="9EQJ"/>
<dbReference type="PDBsum" id="9EQM"/>
<dbReference type="PDBsum" id="9IPW"/>
<dbReference type="EMDB" id="EMD-18657"/>
<dbReference type="EMDB" id="EMD-18915"/>
<dbReference type="EMDB" id="EMD-37464"/>
<dbReference type="EMDB" id="EMD-4736"/>
<dbReference type="EMDB" id="EMD-4739"/>
<dbReference type="SASBDB" id="P40337"/>
<dbReference type="SMR" id="P40337"/>
<dbReference type="BioGRID" id="113269">
    <property type="interactions" value="583"/>
</dbReference>
<dbReference type="ComplexPortal" id="CPX-2250">
    <property type="entry name" value="VHL-Elongin C-Elongin B E3 ubiquitin ligase complex"/>
</dbReference>
<dbReference type="CORUM" id="P40337"/>
<dbReference type="DIP" id="DIP-32585N"/>
<dbReference type="FunCoup" id="P40337">
    <property type="interactions" value="4010"/>
</dbReference>
<dbReference type="IntAct" id="P40337">
    <property type="interactions" value="146"/>
</dbReference>
<dbReference type="MINT" id="P40337"/>
<dbReference type="STRING" id="9606.ENSP00000256474"/>
<dbReference type="BindingDB" id="P40337"/>
<dbReference type="ChEMBL" id="CHEMBL3108660"/>
<dbReference type="GuidetoPHARMACOLOGY" id="3204"/>
<dbReference type="iPTMnet" id="P40337"/>
<dbReference type="PhosphoSitePlus" id="P40337"/>
<dbReference type="BioMuta" id="VHL"/>
<dbReference type="DMDM" id="4033778"/>
<dbReference type="jPOST" id="P40337"/>
<dbReference type="MassIVE" id="P40337"/>
<dbReference type="PaxDb" id="9606-ENSP00000256474"/>
<dbReference type="PeptideAtlas" id="P40337"/>
<dbReference type="ProteomicsDB" id="55362">
    <molecule id="P40337-1"/>
</dbReference>
<dbReference type="ProteomicsDB" id="55363">
    <molecule id="P40337-2"/>
</dbReference>
<dbReference type="ProteomicsDB" id="55364">
    <molecule id="P40337-3"/>
</dbReference>
<dbReference type="Pumba" id="P40337"/>
<dbReference type="Antibodypedia" id="10562">
    <property type="antibodies" value="766 antibodies from 40 providers"/>
</dbReference>
<dbReference type="DNASU" id="7428"/>
<dbReference type="Ensembl" id="ENST00000256474.3">
    <molecule id="P40337-1"/>
    <property type="protein sequence ID" value="ENSP00000256474.3"/>
    <property type="gene ID" value="ENSG00000134086.11"/>
</dbReference>
<dbReference type="Ensembl" id="ENST00000345392.3">
    <molecule id="P40337-2"/>
    <property type="protein sequence ID" value="ENSP00000344757.2"/>
    <property type="gene ID" value="ENSG00000134086.11"/>
</dbReference>
<dbReference type="GeneID" id="7428"/>
<dbReference type="KEGG" id="hsa:7428"/>
<dbReference type="MANE-Select" id="ENST00000256474.3">
    <property type="protein sequence ID" value="ENSP00000256474.3"/>
    <property type="RefSeq nucleotide sequence ID" value="NM_000551.4"/>
    <property type="RefSeq protein sequence ID" value="NP_000542.1"/>
</dbReference>
<dbReference type="UCSC" id="uc003bvc.4">
    <molecule id="P40337-1"/>
    <property type="organism name" value="human"/>
</dbReference>
<dbReference type="AGR" id="HGNC:12687"/>
<dbReference type="CTD" id="7428"/>
<dbReference type="DisGeNET" id="7428"/>
<dbReference type="GeneCards" id="VHL"/>
<dbReference type="GeneReviews" id="VHL"/>
<dbReference type="HGNC" id="HGNC:12687">
    <property type="gene designation" value="VHL"/>
</dbReference>
<dbReference type="HPA" id="ENSG00000134086">
    <property type="expression patterns" value="Low tissue specificity"/>
</dbReference>
<dbReference type="MalaCards" id="VHL"/>
<dbReference type="MIM" id="144700">
    <property type="type" value="phenotype"/>
</dbReference>
<dbReference type="MIM" id="171300">
    <property type="type" value="phenotype"/>
</dbReference>
<dbReference type="MIM" id="193300">
    <property type="type" value="phenotype"/>
</dbReference>
<dbReference type="MIM" id="263400">
    <property type="type" value="phenotype"/>
</dbReference>
<dbReference type="MIM" id="608537">
    <property type="type" value="gene"/>
</dbReference>
<dbReference type="neXtProt" id="NX_P40337"/>
<dbReference type="OpenTargets" id="ENSG00000134086"/>
<dbReference type="Orphanet" id="238557">
    <property type="disease" value="Chuvash erythrocytosis"/>
</dbReference>
<dbReference type="Orphanet" id="29072">
    <property type="disease" value="Hereditary pheochromocytoma-paraganglioma"/>
</dbReference>
<dbReference type="Orphanet" id="276621">
    <property type="disease" value="Sporadic pheochromocytoma/secreting paraganglioma"/>
</dbReference>
<dbReference type="Orphanet" id="892">
    <property type="disease" value="Von Hippel-Lindau disease"/>
</dbReference>
<dbReference type="PharmGKB" id="PA37307"/>
<dbReference type="VEuPathDB" id="HostDB:ENSG00000134086"/>
<dbReference type="eggNOG" id="KOG4710">
    <property type="taxonomic scope" value="Eukaryota"/>
</dbReference>
<dbReference type="GeneTree" id="ENSGT00390000014353"/>
<dbReference type="HOGENOM" id="CLU_116090_0_0_1"/>
<dbReference type="InParanoid" id="P40337"/>
<dbReference type="OMA" id="MNQRVEQ"/>
<dbReference type="OrthoDB" id="413400at2759"/>
<dbReference type="PAN-GO" id="P40337">
    <property type="GO annotations" value="0 GO annotations based on evolutionary models"/>
</dbReference>
<dbReference type="PhylomeDB" id="P40337"/>
<dbReference type="TreeFam" id="TF318985"/>
<dbReference type="BRENDA" id="2.3.2.B13">
    <property type="organism ID" value="2681"/>
</dbReference>
<dbReference type="PathwayCommons" id="P40337"/>
<dbReference type="Reactome" id="R-HSA-1234176">
    <property type="pathway name" value="Oxygen-dependent proline hydroxylation of Hypoxia-inducible Factor Alpha"/>
</dbReference>
<dbReference type="Reactome" id="R-HSA-3232142">
    <property type="pathway name" value="SUMOylation of ubiquitinylation proteins"/>
</dbReference>
<dbReference type="Reactome" id="R-HSA-8951664">
    <property type="pathway name" value="Neddylation"/>
</dbReference>
<dbReference type="Reactome" id="R-HSA-9682706">
    <property type="pathway name" value="Replication of the SARS-CoV-1 genome"/>
</dbReference>
<dbReference type="Reactome" id="R-HSA-9694686">
    <property type="pathway name" value="Replication of the SARS-CoV-2 genome"/>
</dbReference>
<dbReference type="Reactome" id="R-HSA-9706019">
    <property type="pathway name" value="RHOBTB3 ATPase cycle"/>
</dbReference>
<dbReference type="Reactome" id="R-HSA-983168">
    <property type="pathway name" value="Antigen processing: Ubiquitination &amp; Proteasome degradation"/>
</dbReference>
<dbReference type="SignaLink" id="P40337"/>
<dbReference type="SIGNOR" id="P40337"/>
<dbReference type="UniPathway" id="UPA00143"/>
<dbReference type="BioGRID-ORCS" id="7428">
    <property type="hits" value="646 hits in 1234 CRISPR screens"/>
</dbReference>
<dbReference type="CD-CODE" id="5AAA2F68">
    <property type="entry name" value="Synthetic Condensate 000140"/>
</dbReference>
<dbReference type="CD-CODE" id="6A1B29D1">
    <property type="entry name" value="A-bodies"/>
</dbReference>
<dbReference type="CD-CODE" id="DEE660B4">
    <property type="entry name" value="Stress granule"/>
</dbReference>
<dbReference type="ChiTaRS" id="VHL">
    <property type="organism name" value="human"/>
</dbReference>
<dbReference type="EvolutionaryTrace" id="P40337"/>
<dbReference type="GeneWiki" id="Von_Hippel%E2%80%93Lindau_tumor_suppressor"/>
<dbReference type="GenomeRNAi" id="7428"/>
<dbReference type="Pharos" id="P40337">
    <property type="development level" value="Tchem"/>
</dbReference>
<dbReference type="PRO" id="PR:P40337"/>
<dbReference type="Proteomes" id="UP000005640">
    <property type="component" value="Chromosome 3"/>
</dbReference>
<dbReference type="RNAct" id="P40337">
    <property type="molecule type" value="protein"/>
</dbReference>
<dbReference type="Bgee" id="ENSG00000134086">
    <property type="expression patterns" value="Expressed in cortical plate and 112 other cell types or tissues"/>
</dbReference>
<dbReference type="ExpressionAtlas" id="P40337">
    <property type="expression patterns" value="baseline and differential"/>
</dbReference>
<dbReference type="GO" id="GO:0005929">
    <property type="term" value="C:cilium"/>
    <property type="evidence" value="ECO:0000314"/>
    <property type="project" value="HPA"/>
</dbReference>
<dbReference type="GO" id="GO:0005829">
    <property type="term" value="C:cytosol"/>
    <property type="evidence" value="ECO:0000304"/>
    <property type="project" value="Reactome"/>
</dbReference>
<dbReference type="GO" id="GO:0005783">
    <property type="term" value="C:endoplasmic reticulum"/>
    <property type="evidence" value="ECO:0000314"/>
    <property type="project" value="UniProtKB"/>
</dbReference>
<dbReference type="GO" id="GO:0043232">
    <property type="term" value="C:intracellular membraneless organelle"/>
    <property type="evidence" value="ECO:0000269"/>
    <property type="project" value="DisProt"/>
</dbReference>
<dbReference type="GO" id="GO:0015630">
    <property type="term" value="C:microtubule cytoskeleton"/>
    <property type="evidence" value="ECO:0000314"/>
    <property type="project" value="HPA"/>
</dbReference>
<dbReference type="GO" id="GO:0005739">
    <property type="term" value="C:mitochondrion"/>
    <property type="evidence" value="ECO:0000303"/>
    <property type="project" value="UniProtKB"/>
</dbReference>
<dbReference type="GO" id="GO:0005654">
    <property type="term" value="C:nucleoplasm"/>
    <property type="evidence" value="ECO:0000314"/>
    <property type="project" value="HPA"/>
</dbReference>
<dbReference type="GO" id="GO:0005634">
    <property type="term" value="C:nucleus"/>
    <property type="evidence" value="ECO:0000304"/>
    <property type="project" value="ProtInc"/>
</dbReference>
<dbReference type="GO" id="GO:0005886">
    <property type="term" value="C:plasma membrane"/>
    <property type="evidence" value="ECO:0007669"/>
    <property type="project" value="UniProtKB-SubCell"/>
</dbReference>
<dbReference type="GO" id="GO:0140297">
    <property type="term" value="F:DNA-binding transcription factor binding"/>
    <property type="evidence" value="ECO:0000353"/>
    <property type="project" value="UniProtKB"/>
</dbReference>
<dbReference type="GO" id="GO:0019899">
    <property type="term" value="F:enzyme binding"/>
    <property type="evidence" value="ECO:0000353"/>
    <property type="project" value="UniProtKB"/>
</dbReference>
<dbReference type="GO" id="GO:0060090">
    <property type="term" value="F:molecular adaptor activity"/>
    <property type="evidence" value="ECO:0000269"/>
    <property type="project" value="DisProt"/>
</dbReference>
<dbReference type="GO" id="GO:0120283">
    <property type="term" value="F:protein serine/threonine kinase binding"/>
    <property type="evidence" value="ECO:0000353"/>
    <property type="project" value="DisProt"/>
</dbReference>
<dbReference type="GO" id="GO:0003714">
    <property type="term" value="F:transcription corepressor activity"/>
    <property type="evidence" value="ECO:0000270"/>
    <property type="project" value="DisProt"/>
</dbReference>
<dbReference type="GO" id="GO:0003711">
    <property type="term" value="F:transcription elongation factor activity"/>
    <property type="evidence" value="ECO:0000314"/>
    <property type="project" value="UniProtKB"/>
</dbReference>
<dbReference type="GO" id="GO:1990756">
    <property type="term" value="F:ubiquitin-like ligase-substrate adaptor activity"/>
    <property type="evidence" value="ECO:0000314"/>
    <property type="project" value="UniProtKB"/>
</dbReference>
<dbReference type="GO" id="GO:0004842">
    <property type="term" value="F:ubiquitin-protein transferase activity"/>
    <property type="evidence" value="ECO:0000304"/>
    <property type="project" value="Reactome"/>
</dbReference>
<dbReference type="GO" id="GO:1990000">
    <property type="term" value="P:amyloid fibril formation"/>
    <property type="evidence" value="ECO:0000314"/>
    <property type="project" value="DisProt"/>
</dbReference>
<dbReference type="GO" id="GO:0000902">
    <property type="term" value="P:cell morphogenesis"/>
    <property type="evidence" value="ECO:0000303"/>
    <property type="project" value="UniProtKB"/>
</dbReference>
<dbReference type="GO" id="GO:0071456">
    <property type="term" value="P:cellular response to hypoxia"/>
    <property type="evidence" value="ECO:0000304"/>
    <property type="project" value="Reactome"/>
</dbReference>
<dbReference type="GO" id="GO:0043066">
    <property type="term" value="P:negative regulation of apoptotic process"/>
    <property type="evidence" value="ECO:0000303"/>
    <property type="project" value="UniProtKB"/>
</dbReference>
<dbReference type="GO" id="GO:0010507">
    <property type="term" value="P:negative regulation of autophagy"/>
    <property type="evidence" value="ECO:0000314"/>
    <property type="project" value="DisProt"/>
</dbReference>
<dbReference type="GO" id="GO:0008285">
    <property type="term" value="P:negative regulation of cell population proliferation"/>
    <property type="evidence" value="ECO:0000314"/>
    <property type="project" value="DisProt"/>
</dbReference>
<dbReference type="GO" id="GO:0010629">
    <property type="term" value="P:negative regulation of gene expression"/>
    <property type="evidence" value="ECO:0000315"/>
    <property type="project" value="CAFA"/>
</dbReference>
<dbReference type="GO" id="GO:0046426">
    <property type="term" value="P:negative regulation of receptor signaling pathway via JAK-STAT"/>
    <property type="evidence" value="ECO:0000315"/>
    <property type="project" value="CAFA"/>
</dbReference>
<dbReference type="GO" id="GO:0009968">
    <property type="term" value="P:negative regulation of signal transduction"/>
    <property type="evidence" value="ECO:0000269"/>
    <property type="project" value="DisProt"/>
</dbReference>
<dbReference type="GO" id="GO:1904262">
    <property type="term" value="P:negative regulation of TORC1 signaling"/>
    <property type="evidence" value="ECO:0000314"/>
    <property type="project" value="UniProtKB"/>
</dbReference>
<dbReference type="GO" id="GO:0000122">
    <property type="term" value="P:negative regulation of transcription by RNA polymerase II"/>
    <property type="evidence" value="ECO:0000314"/>
    <property type="project" value="UniProtKB"/>
</dbReference>
<dbReference type="GO" id="GO:0034244">
    <property type="term" value="P:negative regulation of transcription elongation by RNA polymerase II"/>
    <property type="evidence" value="ECO:0000314"/>
    <property type="project" value="UniProtKB"/>
</dbReference>
<dbReference type="GO" id="GO:0045597">
    <property type="term" value="P:positive regulation of cell differentiation"/>
    <property type="evidence" value="ECO:0000303"/>
    <property type="project" value="UniProtKB"/>
</dbReference>
<dbReference type="GO" id="GO:0045893">
    <property type="term" value="P:positive regulation of DNA-templated transcription"/>
    <property type="evidence" value="ECO:0000315"/>
    <property type="project" value="UniProtKB"/>
</dbReference>
<dbReference type="GO" id="GO:0043161">
    <property type="term" value="P:proteasome-mediated ubiquitin-dependent protein catabolic process"/>
    <property type="evidence" value="ECO:0000314"/>
    <property type="project" value="UniProtKB"/>
</dbReference>
<dbReference type="GO" id="GO:0050821">
    <property type="term" value="P:protein stabilization"/>
    <property type="evidence" value="ECO:0000303"/>
    <property type="project" value="UniProtKB"/>
</dbReference>
<dbReference type="GO" id="GO:0016567">
    <property type="term" value="P:protein ubiquitination"/>
    <property type="evidence" value="ECO:0000314"/>
    <property type="project" value="ParkinsonsUK-UCL"/>
</dbReference>
<dbReference type="GO" id="GO:0006508">
    <property type="term" value="P:proteolysis"/>
    <property type="evidence" value="ECO:0000304"/>
    <property type="project" value="ProtInc"/>
</dbReference>
<dbReference type="GO" id="GO:1900037">
    <property type="term" value="P:regulation of cellular response to hypoxia"/>
    <property type="evidence" value="ECO:0000269"/>
    <property type="project" value="DisProt"/>
</dbReference>
<dbReference type="GO" id="GO:0006355">
    <property type="term" value="P:regulation of DNA-templated transcription"/>
    <property type="evidence" value="ECO:0000315"/>
    <property type="project" value="BHF-UCL"/>
</dbReference>
<dbReference type="GO" id="GO:0010468">
    <property type="term" value="P:regulation of gene expression"/>
    <property type="evidence" value="ECO:0000314"/>
    <property type="project" value="DisProt"/>
</dbReference>
<dbReference type="CDD" id="cd05468">
    <property type="entry name" value="pVHL"/>
    <property type="match status" value="1"/>
</dbReference>
<dbReference type="DisProt" id="DP00287"/>
<dbReference type="FunFam" id="1.10.750.10:FF:000001">
    <property type="entry name" value="von Hippel-Lindau disease tumor suppressor"/>
    <property type="match status" value="1"/>
</dbReference>
<dbReference type="FunFam" id="2.60.40.780:FF:000001">
    <property type="entry name" value="von Hippel-Lindau disease tumor suppressor"/>
    <property type="match status" value="1"/>
</dbReference>
<dbReference type="Gene3D" id="1.10.750.10">
    <property type="entry name" value="von Hippel-Lindau disease tumour suppressor, alpha domain"/>
    <property type="match status" value="1"/>
</dbReference>
<dbReference type="Gene3D" id="2.60.40.780">
    <property type="entry name" value="von Hippel-Lindau disease tumour suppressor, beta domain"/>
    <property type="match status" value="1"/>
</dbReference>
<dbReference type="IDEAL" id="IID00371"/>
<dbReference type="InterPro" id="IPR024048">
    <property type="entry name" value="VHL_alpha_dom"/>
</dbReference>
<dbReference type="InterPro" id="IPR037139">
    <property type="entry name" value="VHL_alpha_dom_sf"/>
</dbReference>
<dbReference type="InterPro" id="IPR024053">
    <property type="entry name" value="VHL_beta_dom"/>
</dbReference>
<dbReference type="InterPro" id="IPR037140">
    <property type="entry name" value="VHL_beta_dom_sf"/>
</dbReference>
<dbReference type="InterPro" id="IPR036208">
    <property type="entry name" value="VHL_sf"/>
</dbReference>
<dbReference type="InterPro" id="IPR022772">
    <property type="entry name" value="VHL_tumour_suppress_b/a_dom"/>
</dbReference>
<dbReference type="Pfam" id="PF01847">
    <property type="entry name" value="VHL"/>
    <property type="match status" value="1"/>
</dbReference>
<dbReference type="Pfam" id="PF17211">
    <property type="entry name" value="VHL_C"/>
    <property type="match status" value="1"/>
</dbReference>
<dbReference type="SUPFAM" id="SSF49468">
    <property type="entry name" value="VHL"/>
    <property type="match status" value="1"/>
</dbReference>
<organism>
    <name type="scientific">Homo sapiens</name>
    <name type="common">Human</name>
    <dbReference type="NCBI Taxonomy" id="9606"/>
    <lineage>
        <taxon>Eukaryota</taxon>
        <taxon>Metazoa</taxon>
        <taxon>Chordata</taxon>
        <taxon>Craniata</taxon>
        <taxon>Vertebrata</taxon>
        <taxon>Euteleostomi</taxon>
        <taxon>Mammalia</taxon>
        <taxon>Eutheria</taxon>
        <taxon>Euarchontoglires</taxon>
        <taxon>Primates</taxon>
        <taxon>Haplorrhini</taxon>
        <taxon>Catarrhini</taxon>
        <taxon>Hominidae</taxon>
        <taxon>Homo</taxon>
    </lineage>
</organism>
<accession>P40337</accession>
<accession>B2RE45</accession>
<accession>Q13599</accession>
<accession>Q6PDA9</accession>
<reference key="1">
    <citation type="journal article" date="1993" name="Science">
        <title>Identification of the von Hippel-Lindau disease tumor suppressor gene.</title>
        <authorList>
            <person name="Latif F."/>
            <person name="Tory K."/>
            <person name="Gnarra J."/>
            <person name="Yao M."/>
            <person name="Duh F.-M."/>
            <person name="Orcutt M.L."/>
            <person name="Stackhouse T."/>
            <person name="Kuzmin I."/>
            <person name="Modi W."/>
            <person name="Geil L."/>
            <person name="Schmidt L."/>
            <person name="Zhou F."/>
            <person name="Li H."/>
            <person name="Wei M.H."/>
            <person name="Chen F."/>
            <person name="Glenn G."/>
            <person name="Choyke P."/>
            <person name="Walther M.M."/>
            <person name="Weng Y."/>
            <person name="Duan D.-S.R."/>
            <person name="Dean M."/>
            <person name="Glavac D."/>
            <person name="Richards F.M."/>
            <person name="Crossey P.A."/>
            <person name="Ferguson-Smith M.A."/>
            <person name="le Paslier D."/>
            <person name="Chumakov I."/>
            <person name="Cohen D."/>
            <person name="Chinault A.C."/>
            <person name="Maher E.R."/>
            <person name="Linehan W.M."/>
            <person name="Zbar B."/>
            <person name="Lerman M.I."/>
        </authorList>
    </citation>
    <scope>NUCLEOTIDE SEQUENCE [GENOMIC DNA / MRNA] (ISOFORM 1)</scope>
    <scope>VARIANTS VHLD ILE-75 DEL AND 82-ARG--VAL-84 DEL</scope>
    <scope>ALTERNATIVE SPLICING (ISOFORM 2)</scope>
</reference>
<reference key="2">
    <citation type="journal article" date="2004" name="Nat. Genet.">
        <title>Complete sequencing and characterization of 21,243 full-length human cDNAs.</title>
        <authorList>
            <person name="Ota T."/>
            <person name="Suzuki Y."/>
            <person name="Nishikawa T."/>
            <person name="Otsuki T."/>
            <person name="Sugiyama T."/>
            <person name="Irie R."/>
            <person name="Wakamatsu A."/>
            <person name="Hayashi K."/>
            <person name="Sato H."/>
            <person name="Nagai K."/>
            <person name="Kimura K."/>
            <person name="Makita H."/>
            <person name="Sekine M."/>
            <person name="Obayashi M."/>
            <person name="Nishi T."/>
            <person name="Shibahara T."/>
            <person name="Tanaka T."/>
            <person name="Ishii S."/>
            <person name="Yamamoto J."/>
            <person name="Saito K."/>
            <person name="Kawai Y."/>
            <person name="Isono Y."/>
            <person name="Nakamura Y."/>
            <person name="Nagahari K."/>
            <person name="Murakami K."/>
            <person name="Yasuda T."/>
            <person name="Iwayanagi T."/>
            <person name="Wagatsuma M."/>
            <person name="Shiratori A."/>
            <person name="Sudo H."/>
            <person name="Hosoiri T."/>
            <person name="Kaku Y."/>
            <person name="Kodaira H."/>
            <person name="Kondo H."/>
            <person name="Sugawara M."/>
            <person name="Takahashi M."/>
            <person name="Kanda K."/>
            <person name="Yokoi T."/>
            <person name="Furuya T."/>
            <person name="Kikkawa E."/>
            <person name="Omura Y."/>
            <person name="Abe K."/>
            <person name="Kamihara K."/>
            <person name="Katsuta N."/>
            <person name="Sato K."/>
            <person name="Tanikawa M."/>
            <person name="Yamazaki M."/>
            <person name="Ninomiya K."/>
            <person name="Ishibashi T."/>
            <person name="Yamashita H."/>
            <person name="Murakawa K."/>
            <person name="Fujimori K."/>
            <person name="Tanai H."/>
            <person name="Kimata M."/>
            <person name="Watanabe M."/>
            <person name="Hiraoka S."/>
            <person name="Chiba Y."/>
            <person name="Ishida S."/>
            <person name="Ono Y."/>
            <person name="Takiguchi S."/>
            <person name="Watanabe S."/>
            <person name="Yosida M."/>
            <person name="Hotuta T."/>
            <person name="Kusano J."/>
            <person name="Kanehori K."/>
            <person name="Takahashi-Fujii A."/>
            <person name="Hara H."/>
            <person name="Tanase T.-O."/>
            <person name="Nomura Y."/>
            <person name="Togiya S."/>
            <person name="Komai F."/>
            <person name="Hara R."/>
            <person name="Takeuchi K."/>
            <person name="Arita M."/>
            <person name="Imose N."/>
            <person name="Musashino K."/>
            <person name="Yuuki H."/>
            <person name="Oshima A."/>
            <person name="Sasaki N."/>
            <person name="Aotsuka S."/>
            <person name="Yoshikawa Y."/>
            <person name="Matsunawa H."/>
            <person name="Ichihara T."/>
            <person name="Shiohata N."/>
            <person name="Sano S."/>
            <person name="Moriya S."/>
            <person name="Momiyama H."/>
            <person name="Satoh N."/>
            <person name="Takami S."/>
            <person name="Terashima Y."/>
            <person name="Suzuki O."/>
            <person name="Nakagawa S."/>
            <person name="Senoh A."/>
            <person name="Mizoguchi H."/>
            <person name="Goto Y."/>
            <person name="Shimizu F."/>
            <person name="Wakebe H."/>
            <person name="Hishigaki H."/>
            <person name="Watanabe T."/>
            <person name="Sugiyama A."/>
            <person name="Takemoto M."/>
            <person name="Kawakami B."/>
            <person name="Yamazaki M."/>
            <person name="Watanabe K."/>
            <person name="Kumagai A."/>
            <person name="Itakura S."/>
            <person name="Fukuzumi Y."/>
            <person name="Fujimori Y."/>
            <person name="Komiyama M."/>
            <person name="Tashiro H."/>
            <person name="Tanigami A."/>
            <person name="Fujiwara T."/>
            <person name="Ono T."/>
            <person name="Yamada K."/>
            <person name="Fujii Y."/>
            <person name="Ozaki K."/>
            <person name="Hirao M."/>
            <person name="Ohmori Y."/>
            <person name="Kawabata A."/>
            <person name="Hikiji T."/>
            <person name="Kobatake N."/>
            <person name="Inagaki H."/>
            <person name="Ikema Y."/>
            <person name="Okamoto S."/>
            <person name="Okitani R."/>
            <person name="Kawakami T."/>
            <person name="Noguchi S."/>
            <person name="Itoh T."/>
            <person name="Shigeta K."/>
            <person name="Senba T."/>
            <person name="Matsumura K."/>
            <person name="Nakajima Y."/>
            <person name="Mizuno T."/>
            <person name="Morinaga M."/>
            <person name="Sasaki M."/>
            <person name="Togashi T."/>
            <person name="Oyama M."/>
            <person name="Hata H."/>
            <person name="Watanabe M."/>
            <person name="Komatsu T."/>
            <person name="Mizushima-Sugano J."/>
            <person name="Satoh T."/>
            <person name="Shirai Y."/>
            <person name="Takahashi Y."/>
            <person name="Nakagawa K."/>
            <person name="Okumura K."/>
            <person name="Nagase T."/>
            <person name="Nomura N."/>
            <person name="Kikuchi H."/>
            <person name="Masuho Y."/>
            <person name="Yamashita R."/>
            <person name="Nakai K."/>
            <person name="Yada T."/>
            <person name="Nakamura Y."/>
            <person name="Ohara O."/>
            <person name="Isogai T."/>
            <person name="Sugano S."/>
        </authorList>
    </citation>
    <scope>NUCLEOTIDE SEQUENCE [LARGE SCALE MRNA] (ISOFORM 1)</scope>
</reference>
<reference key="3">
    <citation type="journal article" date="2006" name="Nature">
        <title>The DNA sequence, annotation and analysis of human chromosome 3.</title>
        <authorList>
            <person name="Muzny D.M."/>
            <person name="Scherer S.E."/>
            <person name="Kaul R."/>
            <person name="Wang J."/>
            <person name="Yu J."/>
            <person name="Sudbrak R."/>
            <person name="Buhay C.J."/>
            <person name="Chen R."/>
            <person name="Cree A."/>
            <person name="Ding Y."/>
            <person name="Dugan-Rocha S."/>
            <person name="Gill R."/>
            <person name="Gunaratne P."/>
            <person name="Harris R.A."/>
            <person name="Hawes A.C."/>
            <person name="Hernandez J."/>
            <person name="Hodgson A.V."/>
            <person name="Hume J."/>
            <person name="Jackson A."/>
            <person name="Khan Z.M."/>
            <person name="Kovar-Smith C."/>
            <person name="Lewis L.R."/>
            <person name="Lozado R.J."/>
            <person name="Metzker M.L."/>
            <person name="Milosavljevic A."/>
            <person name="Miner G.R."/>
            <person name="Morgan M.B."/>
            <person name="Nazareth L.V."/>
            <person name="Scott G."/>
            <person name="Sodergren E."/>
            <person name="Song X.-Z."/>
            <person name="Steffen D."/>
            <person name="Wei S."/>
            <person name="Wheeler D.A."/>
            <person name="Wright M.W."/>
            <person name="Worley K.C."/>
            <person name="Yuan Y."/>
            <person name="Zhang Z."/>
            <person name="Adams C.Q."/>
            <person name="Ansari-Lari M.A."/>
            <person name="Ayele M."/>
            <person name="Brown M.J."/>
            <person name="Chen G."/>
            <person name="Chen Z."/>
            <person name="Clendenning J."/>
            <person name="Clerc-Blankenburg K.P."/>
            <person name="Chen R."/>
            <person name="Chen Z."/>
            <person name="Davis C."/>
            <person name="Delgado O."/>
            <person name="Dinh H.H."/>
            <person name="Dong W."/>
            <person name="Draper H."/>
            <person name="Ernst S."/>
            <person name="Fu G."/>
            <person name="Gonzalez-Garay M.L."/>
            <person name="Garcia D.K."/>
            <person name="Gillett W."/>
            <person name="Gu J."/>
            <person name="Hao B."/>
            <person name="Haugen E."/>
            <person name="Havlak P."/>
            <person name="He X."/>
            <person name="Hennig S."/>
            <person name="Hu S."/>
            <person name="Huang W."/>
            <person name="Jackson L.R."/>
            <person name="Jacob L.S."/>
            <person name="Kelly S.H."/>
            <person name="Kube M."/>
            <person name="Levy R."/>
            <person name="Li Z."/>
            <person name="Liu B."/>
            <person name="Liu J."/>
            <person name="Liu W."/>
            <person name="Lu J."/>
            <person name="Maheshwari M."/>
            <person name="Nguyen B.-V."/>
            <person name="Okwuonu G.O."/>
            <person name="Palmeiri A."/>
            <person name="Pasternak S."/>
            <person name="Perez L.M."/>
            <person name="Phelps K.A."/>
            <person name="Plopper F.J."/>
            <person name="Qiang B."/>
            <person name="Raymond C."/>
            <person name="Rodriguez R."/>
            <person name="Saenphimmachak C."/>
            <person name="Santibanez J."/>
            <person name="Shen H."/>
            <person name="Shen Y."/>
            <person name="Subramanian S."/>
            <person name="Tabor P.E."/>
            <person name="Verduzco D."/>
            <person name="Waldron L."/>
            <person name="Wang J."/>
            <person name="Wang J."/>
            <person name="Wang Q."/>
            <person name="Williams G.A."/>
            <person name="Wong G.K.-S."/>
            <person name="Yao Z."/>
            <person name="Zhang J."/>
            <person name="Zhang X."/>
            <person name="Zhao G."/>
            <person name="Zhou J."/>
            <person name="Zhou Y."/>
            <person name="Nelson D."/>
            <person name="Lehrach H."/>
            <person name="Reinhardt R."/>
            <person name="Naylor S.L."/>
            <person name="Yang H."/>
            <person name="Olson M."/>
            <person name="Weinstock G."/>
            <person name="Gibbs R.A."/>
        </authorList>
    </citation>
    <scope>NUCLEOTIDE SEQUENCE [LARGE SCALE GENOMIC DNA]</scope>
</reference>
<reference key="4">
    <citation type="submission" date="2005-07" db="EMBL/GenBank/DDBJ databases">
        <authorList>
            <person name="Mural R.J."/>
            <person name="Istrail S."/>
            <person name="Sutton G.G."/>
            <person name="Florea L."/>
            <person name="Halpern A.L."/>
            <person name="Mobarry C.M."/>
            <person name="Lippert R."/>
            <person name="Walenz B."/>
            <person name="Shatkay H."/>
            <person name="Dew I."/>
            <person name="Miller J.R."/>
            <person name="Flanigan M.J."/>
            <person name="Edwards N.J."/>
            <person name="Bolanos R."/>
            <person name="Fasulo D."/>
            <person name="Halldorsson B.V."/>
            <person name="Hannenhalli S."/>
            <person name="Turner R."/>
            <person name="Yooseph S."/>
            <person name="Lu F."/>
            <person name="Nusskern D.R."/>
            <person name="Shue B.C."/>
            <person name="Zheng X.H."/>
            <person name="Zhong F."/>
            <person name="Delcher A.L."/>
            <person name="Huson D.H."/>
            <person name="Kravitz S.A."/>
            <person name="Mouchard L."/>
            <person name="Reinert K."/>
            <person name="Remington K.A."/>
            <person name="Clark A.G."/>
            <person name="Waterman M.S."/>
            <person name="Eichler E.E."/>
            <person name="Adams M.D."/>
            <person name="Hunkapiller M.W."/>
            <person name="Myers E.W."/>
            <person name="Venter J.C."/>
        </authorList>
    </citation>
    <scope>NUCLEOTIDE SEQUENCE [LARGE SCALE GENOMIC DNA]</scope>
</reference>
<reference key="5">
    <citation type="journal article" date="2004" name="Genome Res.">
        <title>The status, quality, and expansion of the NIH full-length cDNA project: the Mammalian Gene Collection (MGC).</title>
        <authorList>
            <consortium name="The MGC Project Team"/>
        </authorList>
    </citation>
    <scope>NUCLEOTIDE SEQUENCE [LARGE SCALE MRNA] (ISOFORM 2)</scope>
    <scope>VARIANT TYR-110</scope>
</reference>
<reference key="6">
    <citation type="submission" date="1996-04" db="EMBL/GenBank/DDBJ databases">
        <authorList>
            <person name="Wenzel M."/>
        </authorList>
    </citation>
    <scope>NUCLEOTIDE SEQUENCE [GENOMIC DNA] OF 33-67 AND 156-213</scope>
    <scope>VARIANT PRO-163</scope>
    <source>
        <tissue>Renal cell carcinoma</tissue>
    </source>
</reference>
<reference key="7">
    <citation type="journal article" date="1996" name="Hum. Mol. Genet.">
        <title>Expression of the von Hippel-Lindau disease tumour suppressor gene during human embryogenesis.</title>
        <authorList>
            <person name="Richards F.M."/>
            <person name="Schofield P.N."/>
            <person name="Fleming S."/>
            <person name="Maher E.R."/>
        </authorList>
    </citation>
    <scope>DEVELOPMENTAL STAGE</scope>
    <scope>ALTERNATIVE SPLICING (ISOFORMS 1 AND 2)</scope>
</reference>
<reference key="8">
    <citation type="journal article" date="1997" name="Proc. Natl. Acad. Sci. U.S.A.">
        <title>The von Hippel-Lindau tumor-suppressor gene product forms a stable complex with human CUL-2, a member of the Cdc53 family of proteins.</title>
        <authorList>
            <person name="Pause A."/>
            <person name="Lee S."/>
            <person name="Worrel R."/>
            <person name="Chen D.Y.T."/>
            <person name="Burgess W.H."/>
            <person name="Linehan W.M."/>
            <person name="Klausner R.D."/>
        </authorList>
    </citation>
    <scope>INTERACTION WITH CUL2</scope>
</reference>
<reference key="9">
    <citation type="journal article" date="1998" name="Proc. Natl. Acad. Sci. U.S.A.">
        <title>A second major native von Hippel-Lindau gene product, initiated from an internal translation start site, functions as a tumor suppressor.</title>
        <authorList>
            <person name="Schoenfeld A."/>
            <person name="Davidowitz E.J."/>
            <person name="Burk R.D."/>
        </authorList>
    </citation>
    <scope>ALTERNATIVE SPLICING (ISOFORM 3)</scope>
</reference>
<reference key="10">
    <citation type="journal article" date="1995" name="Science">
        <title>Binding of the von Hippel-Lindau tumor suppressor protein to Elongin B and C.</title>
        <authorList>
            <person name="Kibel A."/>
            <person name="Iliopoulos O."/>
            <person name="DeCaprio J.A."/>
            <person name="Kaelin W.G. Jr."/>
        </authorList>
    </citation>
    <scope>INTERACTION WITH ELONGIN BC COMPLEX</scope>
</reference>
<reference key="11">
    <citation type="journal article" date="1998" name="Proc. Natl. Acad. Sci. U.S.A.">
        <title>pVHL19 is a biologically active product of the von Hippel-Lindau gene arising from internal translation initiation.</title>
        <authorList>
            <person name="Iliopoulos O."/>
            <person name="Ohh M."/>
            <person name="Kaelin W.G. Jr."/>
        </authorList>
    </citation>
    <scope>FUNCTION (ISOFORM 3)</scope>
    <scope>SUBCELLULAR LOCATION (ISOFORMS 1 AND 3)</scope>
</reference>
<reference key="12">
    <citation type="journal article" date="1999" name="Mol. Cell">
        <title>Formation of the VHL-elongin BC tumor suppressor complex is mediated by the chaperonin TRiC.</title>
        <authorList>
            <person name="Feldman D.E."/>
            <person name="Thulasiraman V."/>
            <person name="Ferreyra R.G."/>
            <person name="Frydman J."/>
        </authorList>
    </citation>
    <scope>INTERACTION WITH CHAPERONES</scope>
    <scope>VARIANT VHLD PRO-158</scope>
</reference>
<reference key="13">
    <citation type="journal article" date="2000" name="EMBO J.">
        <title>Mechanism of regulation of the hypoxia-inducible factor-1 alpha by the von Hippel-Lindau tumor suppressor protein.</title>
        <authorList>
            <person name="Tanimoto K."/>
            <person name="Makino Y."/>
            <person name="Pereira T."/>
            <person name="Poellinger L."/>
        </authorList>
    </citation>
    <scope>INTERACTION WITH HIF1A</scope>
    <scope>FUNCTION</scope>
    <scope>CHARACTERIZATION OF VARIANT PHE-162</scope>
    <scope>MUTAGENESIS OF TYR-98</scope>
</reference>
<reference key="14">
    <citation type="journal article" date="2001" name="J. Biol. Chem.">
        <title>Muf1, a novel elongin BC-interacting leucine-rich repeat protein that can assemble with Cul5 and Rbx1 to reconstitute a ubiquitin ligase.</title>
        <authorList>
            <person name="Kamura T."/>
            <person name="Burian D."/>
            <person name="Yan Q."/>
            <person name="Schmidt S.L."/>
            <person name="Lane W.S."/>
            <person name="Querido E."/>
            <person name="Branton P.E."/>
            <person name="Shilatifard A."/>
            <person name="Conaway R.C."/>
            <person name="Conaway J.W."/>
        </authorList>
    </citation>
    <scope>IDENTIFICATION IN E3 UBIQUITIN-PROTEIN LIGASE COMPLEXES</scope>
</reference>
<reference key="15">
    <citation type="journal article" date="2001" name="Genes Dev.">
        <title>FIH-1: a novel protein that interacts with HIF-1alpha and VHL to mediate repression of HIF-1 transcriptional activity.</title>
        <authorList>
            <person name="Mahon P.C."/>
            <person name="Hirota K."/>
            <person name="Semenza G.L."/>
        </authorList>
    </citation>
    <scope>INTERACTION WITH HIF1AN; HIF1A AND HISTONE DEACETYLASES</scope>
    <source>
        <tissue>Brain</tissue>
    </source>
</reference>
<reference key="16">
    <citation type="journal article" date="2002" name="J. Biol. Chem.">
        <title>Ubiquitination of a novel deubiquitinating enzyme requires direct binding to von Hippel-Lindau tumor suppressor protein.</title>
        <authorList>
            <person name="Li Z."/>
            <person name="Na X."/>
            <person name="Wang D."/>
            <person name="Schoen S.R."/>
            <person name="Messing E.M."/>
            <person name="Wu G."/>
        </authorList>
    </citation>
    <scope>INTERACTION WITH USP33</scope>
</reference>
<reference key="17">
    <citation type="journal article" date="2002" name="J. Biol. Chem.">
        <title>The von Hippel-Lindau tumor suppressor stabilizes novel plant homeodomain protein Jade-1.</title>
        <authorList>
            <person name="Zhou M.I."/>
            <person name="Wang H."/>
            <person name="Ross J.J."/>
            <person name="Kuzmin I."/>
            <person name="Xu C."/>
            <person name="Cohen H.T."/>
        </authorList>
    </citation>
    <scope>INTERACTION WITH JADE1</scope>
    <scope>SUBCELLULAR LOCATION</scope>
</reference>
<reference key="18">
    <citation type="journal article" date="2002" name="Oncogene">
        <title>The TRC8 hereditary kidney cancer gene suppresses growth and functions with VHL in a common pathway.</title>
        <authorList>
            <person name="Gemmill R.M."/>
            <person name="Bemis L.T."/>
            <person name="Lee J.P."/>
            <person name="Sozen M.A."/>
            <person name="Baron A."/>
            <person name="Zeng C."/>
            <person name="Erickson P.F."/>
            <person name="Hooper J.E."/>
            <person name="Drabkin H.A."/>
        </authorList>
    </citation>
    <scope>INTERACTION WITH RNF139</scope>
</reference>
<reference key="19">
    <citation type="journal article" date="2005" name="Biochem. Cell Biol.">
        <title>Erythroid-specific 5-aminolevulinate synthase protein is stabilized by low oxygen and proteasomal inhibition.</title>
        <authorList>
            <person name="Abu-Farha M."/>
            <person name="Niles J."/>
            <person name="Willmore W.G."/>
        </authorList>
    </citation>
    <scope>INTERACTION WITH ALAS1</scope>
</reference>
<reference key="20">
    <citation type="journal article" date="2007" name="Cell">
        <title>SUMO-specific protease 1 is essential for stabilization of HIF1alpha during hypoxia.</title>
        <authorList>
            <person name="Cheng J."/>
            <person name="Kang X."/>
            <person name="Zhang S."/>
            <person name="Yeh E.T.H."/>
        </authorList>
    </citation>
    <scope>FUNCTION</scope>
    <scope>INTERACTION WITH HIF1A</scope>
</reference>
<reference key="21">
    <citation type="journal article" date="2009" name="J. Biol. Chem.">
        <title>Erythrocytosis-associated HIF-2alpha mutations demonstrate a critical role for residues C-terminal to the hydroxylacceptor proline.</title>
        <authorList>
            <person name="Furlow P.W."/>
            <person name="Percy M.J."/>
            <person name="Sutherland S."/>
            <person name="Bierl C."/>
            <person name="McMullin M.F."/>
            <person name="Master S.R."/>
            <person name="Lappin T.R."/>
            <person name="Lee F.S."/>
        </authorList>
    </citation>
    <scope>INTERACTION WITH EPAS1</scope>
</reference>
<reference key="22">
    <citation type="journal article" date="2009" name="Sci. Signal.">
        <title>Oxygen-regulated beta(2)-adrenergic receptor hydroxylation by EGLN3 and ubiquitylation by pVHL.</title>
        <authorList>
            <person name="Xie L."/>
            <person name="Xiao K."/>
            <person name="Whalen E.J."/>
            <person name="Forrester M.T."/>
            <person name="Freeman R.S."/>
            <person name="Fong G."/>
            <person name="Gygi S.P."/>
            <person name="Lefkowitz R.J."/>
            <person name="Stamler J.S."/>
        </authorList>
    </citation>
    <scope>INTERACTION WITH ADRB2</scope>
    <scope>SUBCELLULAR LOCATION</scope>
    <scope>FUNCTION</scope>
</reference>
<reference key="23">
    <citation type="journal article" date="2012" name="Nat. Cell Biol.">
        <title>The LIMD1 protein bridges an association between the prolyl hydroxylases and VHL to repress HIF-1 activity.</title>
        <authorList>
            <person name="Foxler D.E."/>
            <person name="Bridge K.S."/>
            <person name="James V."/>
            <person name="Webb T.M."/>
            <person name="Mee M."/>
            <person name="Wong S.C."/>
            <person name="Feng Y."/>
            <person name="Constantin-Teodosiu D."/>
            <person name="Petursdottir T.E."/>
            <person name="Bjornsson J."/>
            <person name="Ingvarsson S."/>
            <person name="Ratcliffe P.J."/>
            <person name="Longmore G.D."/>
            <person name="Sharp T.V."/>
        </authorList>
    </citation>
    <scope>INTERACTION WITH LIMD1; AJUBA AND WTIP</scope>
    <scope>IDENTIFICATION IN A COMPLEX WITH LIMD1; EGLN1/PHD2; ELOB AND CUL2</scope>
</reference>
<reference key="24">
    <citation type="journal article" date="2013" name="Mol. Cell. Biol.">
        <title>DCNL1 functions as a substrate sensor and activator of cullin 2-RING ligase.</title>
        <authorList>
            <person name="Heir P."/>
            <person name="Sufan R.I."/>
            <person name="Greer S.N."/>
            <person name="Poon B.P."/>
            <person name="Lee J.E."/>
            <person name="Ohh M."/>
        </authorList>
    </citation>
    <scope>INTERACTION WITH DCUN1D1</scope>
</reference>
<reference key="25">
    <citation type="journal article" date="2021" name="Sci. Rep.">
        <title>VHL suppresses RAPTOR and inhibits mTORC1 signaling in clear cell renal cell carcinoma.</title>
        <authorList>
            <person name="Ganner A."/>
            <person name="Gehrke C."/>
            <person name="Klein M."/>
            <person name="Thegtmeier L."/>
            <person name="Matulenski T."/>
            <person name="Wingendorf L."/>
            <person name="Wang L."/>
            <person name="Pilz F."/>
            <person name="Greidl L."/>
            <person name="Meid L."/>
            <person name="Kotsis F."/>
            <person name="Walz G."/>
            <person name="Frew I.J."/>
            <person name="Neumann-Haefelin E."/>
        </authorList>
    </citation>
    <scope>FUNCTION</scope>
    <scope>PATHWAY</scope>
    <scope>SUBCELLULAR LOCATION</scope>
</reference>
<reference key="26">
    <citation type="journal article" date="2002" name="Science">
        <title>Structure of an HIF-1alpha-pVHL complex: hydroxyproline recognition in signaling.</title>
        <authorList>
            <person name="Min J.-H."/>
            <person name="Yang H."/>
            <person name="Ivan M."/>
            <person name="Gertler F."/>
            <person name="Kaelin W.G. Jr."/>
            <person name="Pavletich N.P."/>
        </authorList>
    </citation>
    <scope>X-RAY CRYSTALLOGRAPHY (1.85 ANGSTROMS) OF 54-213 IN COMPLEX WITH 556-575 OF HIF1A; ELOB AND ELOC</scope>
</reference>
<reference key="27">
    <citation type="journal article" date="2002" name="Nature">
        <title>Structural basis for the recognition of hydroxyproline in HIF-1 alpha by pVHL.</title>
        <authorList>
            <person name="Hon W.-C."/>
            <person name="Wilson M.I."/>
            <person name="Harlos K."/>
            <person name="Claridge T.D.W."/>
            <person name="Schofield C.J."/>
            <person name="Pugh C.W."/>
            <person name="Maxwell P.H."/>
            <person name="Ratcliffe P.J."/>
            <person name="Stuart D.I."/>
            <person name="Jones E.Y."/>
        </authorList>
    </citation>
    <scope>X-RAY CRYSTALLOGRAPHY (2.0 ANGSTROMS) OF 52-213 IN COMPLEX WITH 549-582 OF HIF1A; 17-112 OF ELOB AND ELOC</scope>
</reference>
<reference key="28">
    <citation type="journal article" date="1999" name="Science">
        <title>Structure of the VHL-ElonginC-ElonginB complex: implications for VHL tumor suppressor function.</title>
        <authorList>
            <person name="Stebbins C.E."/>
            <person name="Kaelin W.G. Jr."/>
            <person name="Pavletich N.P."/>
        </authorList>
    </citation>
    <scope>X-RAY CRYSTALLOGRAPHY (2.7 ANGSTROMS) OF 54-213 IN COMPLEX WITH 17-112 OF ELOB AND ELOC</scope>
</reference>
<reference key="29">
    <citation type="journal article" date="1994" name="Cancer Res.">
        <title>Somatic mutations of the von Hippel-Lindau tumor suppressor gene in sporadic central nervous system hemangioblastomas.</title>
        <authorList>
            <person name="Kanno H."/>
            <person name="Kondo K."/>
            <person name="Ito S."/>
            <person name="Yamamoto I."/>
            <person name="Fujii S."/>
            <person name="Torigoe S."/>
            <person name="Sakai N."/>
            <person name="Hosaka M."/>
            <person name="Shuin T."/>
            <person name="Yao M."/>
        </authorList>
    </citation>
    <scope>VARIANT HEMANGIOBLASTOMA PHE-135</scope>
</reference>
<reference key="30">
    <citation type="journal article" date="1994" name="Hum. Mol. Genet.">
        <title>Identification of intragenic mutations in the von Hippel-Lindau disease tumour suppressor gene and correlation with disease phenotype.</title>
        <authorList>
            <person name="Crossey P.A."/>
            <person name="Richards F.M."/>
            <person name="Foster K."/>
            <person name="Green J.S."/>
            <person name="Prowse A."/>
            <person name="Latif F."/>
            <person name="Lerman M.I."/>
            <person name="Zbar B."/>
            <person name="Affara N.A."/>
            <person name="Ferguson-Smith M.A."/>
            <person name="Maher E.R."/>
        </authorList>
    </citation>
    <scope>VARIANT VHLD PHE-170</scope>
</reference>
<reference key="31">
    <citation type="journal article" date="1994" name="Oncogene">
        <title>Molecular analysis of the von Hippel-Lindau disease tumor suppressor gene in human lung cancer cell lines.</title>
        <authorList>
            <person name="Sekido Y."/>
            <person name="Bader S."/>
            <person name="Latif F."/>
            <person name="Gnarra J.R."/>
            <person name="Gazdar A.F."/>
            <person name="Linehan W.M."/>
            <person name="Zbar B."/>
            <person name="Lerman M.I."/>
            <person name="Minna J.D."/>
        </authorList>
    </citation>
    <scope>VARIANTS IN LUNG CANCER</scope>
</reference>
<reference key="32">
    <citation type="journal article" date="1995" name="Hum. Mutat.">
        <title>Germline mutations in the von Hippel-Lindau disease tumor suppressor gene: correlations with phenotype.</title>
        <authorList>
            <person name="Chen F."/>
            <person name="Kishida T."/>
            <person name="Yao M."/>
            <person name="Hustad T."/>
            <person name="Glavac D."/>
            <person name="Dean M."/>
            <person name="Gnarra J.R."/>
            <person name="Orcutt M.L."/>
            <person name="Duh F.-M."/>
            <person name="Glenn G."/>
            <person name="Green J.S."/>
            <person name="Hsia Y.E."/>
            <person name="Lamiell J."/>
            <person name="Li H."/>
            <person name="Wei M.H."/>
            <person name="Schmidt L."/>
            <person name="Tory K."/>
            <person name="Kuzmin I."/>
            <person name="Stackhouse T."/>
            <person name="Latif F."/>
            <person name="Linehan W.M."/>
            <person name="Lerman M.I."/>
            <person name="Zbar B."/>
        </authorList>
    </citation>
    <scope>VARIANTS VHLD</scope>
</reference>
<reference key="33">
    <citation type="journal article" date="1995" name="Hum. Mol. Genet.">
        <title>Germline mutations in the von Hippel-Lindau disease (VHL) gene in Japanese VHL. Clinical Research Group for VHL in Japan.</title>
        <authorList>
            <person name="Kondo K."/>
            <person name="Sakai N."/>
            <person name="Kaneko S."/>
            <person name="Kobayashi K."/>
            <person name="Hosaka M."/>
            <person name="Ito S."/>
            <person name="Fujii S."/>
            <person name="Yamamoto I."/>
            <person name="Kim I."/>
            <person name="Miyagami M."/>
            <person name="Shidara N."/>
            <person name="Shinohara N."/>
            <person name="Koyanagi T."/>
            <person name="Kato N."/>
            <person name="Yamanaka H."/>
            <person name="Kuratu J."/>
            <person name="Fujioka M."/>
            <person name="Nakatsu H."/>
            <person name="Shimazaki J."/>
            <person name="Yoshida J."/>
            <person name="Sugita K."/>
            <person name="Hirao Y."/>
            <person name="Okajima E."/>
            <person name="Tanigawa T."/>
            <person name="Sato S."/>
            <person name="Fujino H."/>
            <person name="Nagata M."/>
            <person name="Kanayama H."/>
            <person name="Kagawa S."/>
            <person name="Yamashima T."/>
            <person name="Furuta T."/>
            <person name="Saito Y."/>
            <person name="Kanno H."/>
            <person name="Yao M."/>
            <person name="Shuin T."/>
        </authorList>
    </citation>
    <scope>VARIANTS VHLD</scope>
</reference>
<reference key="34">
    <citation type="journal article" date="1995" name="J. Med. Genet.">
        <title>Molecular genetic diagnosis of von Hippel-Lindau disease in familial phaeochromocytoma.</title>
        <authorList>
            <person name="Crossey P.A."/>
            <person name="Eng C."/>
            <person name="Ginalska-Malinowska M."/>
            <person name="Lennard T.W.J."/>
            <person name="Wheeler D.C."/>
            <person name="Ponder B.A.J."/>
            <person name="Maher E.R."/>
        </authorList>
    </citation>
    <scope>VARIANTS VHLD LEU-84 AND TRP-167</scope>
</reference>
<reference key="35">
    <citation type="journal article" date="1995" name="J. Med. Genet.">
        <title>Mutations in the RET proto-oncogene and the von Hippel-Lindau disease tumour suppressor gene in sporadic and syndromic phaeochromocytomas.</title>
        <authorList>
            <person name="Eng C."/>
            <person name="Crossey P.A."/>
            <person name="Mulligan L.M."/>
            <person name="Healey C.S."/>
            <person name="Houghton C."/>
            <person name="Prowse A."/>
            <person name="Chew S.L."/>
            <person name="Dahia P.L.M."/>
            <person name="O'Riordan J.L.H."/>
            <person name="Toledo S.P.A."/>
            <person name="Smith D.P."/>
            <person name="Maher E.R."/>
            <person name="Ponder B.A.J."/>
        </authorList>
    </citation>
    <scope>VARIANTS VHLD SER-114; SER-119; GLU-143 AND ARG-164</scope>
</reference>
<reference key="36">
    <citation type="journal article" date="1996" name="Hum. Genet.">
        <title>Mutations in the VHL tumor suppressor gene and associated lesions in families with von Hippel-Lindau disease from central Europe.</title>
        <authorList>
            <person name="Glavac D."/>
            <person name="Neumann H.P."/>
            <person name="Wittke C."/>
            <person name="Jaenig H."/>
            <person name="Masek O."/>
            <person name="Streicher T."/>
            <person name="Pausch F."/>
            <person name="Engelhardt D."/>
            <person name="Plate K.H."/>
            <person name="Hoefler H."/>
            <person name="Chen F."/>
            <person name="Zbar B."/>
            <person name="Brauch H."/>
        </authorList>
    </citation>
    <scope>VARIANT VHLD GLN-178</scope>
</reference>
<reference key="37">
    <citation type="journal article" date="1996" name="J. Med. Genet.">
        <title>Phenotypic expression in von Hippel-Lindau disease: correlations with germline VHL gene mutations.</title>
        <authorList>
            <person name="Maher E.R."/>
            <person name="Webster A.R."/>
            <person name="Richards F.M."/>
            <person name="Green J.S."/>
            <person name="Crossey P.A."/>
            <person name="Payne S.J."/>
            <person name="Moore A.T."/>
        </authorList>
    </citation>
    <scope>VARIANTS VHLD PRO-96; VAL-116; ARG-118; PHE-166; ASP-170 AND GLU-186 DEL</scope>
</reference>
<reference key="38">
    <citation type="journal article" date="1996" name="Hum. Mutat.">
        <title>Germline mutations in the von Hippel-Lindau disease (VHL) gene in families from North America, Europe, and Japan.</title>
        <authorList>
            <person name="Zbar B."/>
            <person name="Kishida T."/>
            <person name="Chen F."/>
            <person name="Schmidt L."/>
            <person name="Maher E.R."/>
            <person name="Richards F.M."/>
            <person name="Crossey P.A."/>
            <person name="Webster A.R."/>
            <person name="Affara N.A."/>
            <person name="Ferguson-Smith M.A."/>
            <person name="Brauch H."/>
            <person name="Glavac D."/>
            <person name="Neumann H.P.H."/>
            <person name="Tisherman S."/>
            <person name="Mulvihill J.J."/>
            <person name="Gross D.J."/>
            <person name="Shuin T."/>
            <person name="Whaley J."/>
            <person name="Seizinger B."/>
            <person name="Kley N."/>
            <person name="Olschwang S."/>
            <person name="Boisson C."/>
            <person name="Richard S."/>
            <person name="Lips C.H.M."/>
            <person name="Linehan W.M."/>
            <person name="Lerman M.I."/>
        </authorList>
    </citation>
    <scope>VARIANTS VHLD LEU-65; TRP-65; GLY-74; PHE-76 DEL; ILE-76; HIS-78; SER-78; THR-78; ARG-80; ASN-80; ILE-80; SER-81; ALA-86; LEU-86; ARG-88; SER-88; PRO-89; ARG-101; ARG-111; ASN-111; CYS-114; TYR-115; CYS-117; PRO-118; GLY-121; LEU-130; PRO-158; VAL-158; PRO-161; ARG-162; PHE-162; TYR-162; TRP-162; ARG-164; GLN-167; TRP-167; GLY-170; PRO-178; VAL-180; ARG-184; PRO-184; LYS-186; GLN-188 AND TRP-200</scope>
</reference>
<reference key="39">
    <citation type="journal article" date="1998" name="Hum. Mutat. Suppl.">
        <title>Germline mutations detected in the von Hippel-Lindau disease tumor suppressor gene by Southern blot and direct genomic DNA sequencing.</title>
        <authorList>
            <person name="Li C."/>
            <person name="Weber G."/>
            <person name="Ekman P."/>
            <person name="Lagercrantz J."/>
            <person name="Norlen B.J."/>
            <person name="Aakerstroem G."/>
            <person name="Nordenskjoeld M."/>
            <person name="Bergerheim U.S.R."/>
        </authorList>
    </citation>
    <scope>VARIANTS VHLD PRO-38; LEU-76 AND PHE-162</scope>
</reference>
<reference key="40">
    <citation type="journal article" date="1998" name="Hum. Mutat. Suppl.">
        <title>Three novel mutations in the von Hippel-Lindau tumour suppressor gene in Italian patients.</title>
        <authorList>
            <person name="Mandich P."/>
            <person name="Montera M."/>
            <person name="Bellone E."/>
            <person name="Trojani A."/>
            <person name="Daniele S."/>
            <person name="Ajmar F."/>
        </authorList>
    </citation>
    <scope>VARIANT VHLD THR-149</scope>
</reference>
<reference key="41">
    <citation type="journal article" date="1998" name="Hum. Mutat.">
        <title>Variable penetrance of familial pheochromocytoma associated with the von Hippel-Lindau gene mutation, S68W.</title>
        <authorList>
            <person name="Martin R."/>
            <person name="Hockey A."/>
            <person name="Walpole I."/>
            <person name="Goldblatt J."/>
        </authorList>
    </citation>
    <scope>VARIANT VHLD TRP-68</scope>
</reference>
<reference key="42">
    <citation type="journal article" date="1998" name="Hum. Mutat.">
        <title>Improved detection of germline mutations in the von Hippel-Lindau disease tumor suppressor gene.</title>
        <authorList>
            <person name="Stolle C."/>
            <person name="Glenn G."/>
            <person name="Zbar B."/>
            <person name="Humphrey J.S."/>
            <person name="Choyke P."/>
            <person name="Walther M."/>
            <person name="Pack S."/>
            <person name="Hurley K."/>
            <person name="Andrey C."/>
            <person name="Klausner R."/>
            <person name="Linehan W.M."/>
        </authorList>
    </citation>
    <scope>VARIANTS VHLD TRP-65; SER-76; SER-81; ARG-86; ARG-88; GLY-101; PRO-107; ASN-111; CYS-117; THR-131; PHE-162; GLY-167; ASP-175; PRO-184 AND LYS-186</scope>
</reference>
<reference key="43">
    <citation type="journal article" date="1998" name="Hum. Mutat.">
        <title>Germline mutation profile of the VHL gene in von Hippel-Lindau disease and in sporadic hemangioblastoma.</title>
        <authorList>
            <person name="Olschwang S."/>
            <person name="Richard S."/>
            <person name="Boisson C."/>
            <person name="Giraud S."/>
            <person name="Laurent-Puig P."/>
            <person name="Resche F."/>
            <person name="Thomas G."/>
        </authorList>
    </citation>
    <scope>VARIANTS VHLD LYS-52; LEU-65; LYS-70; ASN-80; ARG-80; SER-86; SER-88; LEU-91; ALA-104; PRO-105; GLN-115; CYS-117; PRO-118; LEU-130; LYS-131; SER-136; ASP-156; CYS-156; ILE-157; PRO-158; GLN-161; TRP-162; PHE-166; GLN-167; TRP-167; GLY-170; PRO-188 AND TRP-200</scope>
</reference>
<reference key="44">
    <citation type="journal article" date="1998" name="Int. J. Cancer">
        <title>Germline mutations in the vhl gene in patients presenting with phaeochromocytomas.</title>
        <authorList>
            <person name="van der Harst E."/>
            <person name="de Krijger R.R."/>
            <person name="Dinjens W.N.M."/>
            <person name="Weeks L.E."/>
            <person name="Bonjer H.J."/>
            <person name="Bruining H.A."/>
            <person name="Lamberts S.W.J."/>
            <person name="Koper J.W."/>
        </authorList>
    </citation>
    <scope>VARIANTS PCC LEU-25; PRO-63; PRO-64 AND THR-147</scope>
</reference>
<reference key="45">
    <citation type="journal article" date="1998" name="J. Intern. Med.">
        <title>Genotype-phenotype correlations in von Hippel-Lindau disease.</title>
        <authorList>
            <person name="Neumann H.P."/>
            <person name="Bender B.U."/>
        </authorList>
    </citation>
    <scope>VARIANT VHLD PHE-128</scope>
</reference>
<reference key="46">
    <citation type="unpublished observations" date="1999-05">
        <authorList>
            <person name="Murigia M."/>
        </authorList>
    </citation>
    <scope>VARIANTS VHLD CYS-93; GLY-155 AND ILE-157</scope>
</reference>
<reference key="47">
    <citation type="journal article" date="1999" name="Am. J. Med. Genet.">
        <title>Two distinct phenotypes caused by two different missense mutations in the same codon of the VHL gene.</title>
        <authorList>
            <person name="Bradley J.F."/>
            <person name="Collins D.L."/>
            <person name="Schimke R.N."/>
            <person name="Parrott H.N."/>
            <person name="Rothberg P.G."/>
        </authorList>
    </citation>
    <scope>VARIANT VHLD ASN-112</scope>
</reference>
<reference key="48">
    <citation type="journal article" date="1999" name="Hum. Mutat.">
        <title>Mutations of the VHL gene in sporadic renal cell carcinoma: definition of a risk factor for VHL patients to develop an RCC.</title>
        <authorList>
            <person name="Gallou C."/>
            <person name="Joly D."/>
            <person name="Mejean A."/>
            <person name="Staroz F."/>
            <person name="Martin N."/>
            <person name="Tarlet G."/>
            <person name="Orfanelli M.T."/>
            <person name="Bouvier R."/>
            <person name="Droz D."/>
            <person name="Chretien Y."/>
            <person name="Marechal J.M."/>
            <person name="Richard S."/>
            <person name="Junien C."/>
            <person name="Beroud C."/>
        </authorList>
    </citation>
    <scope>VARIANTS VHLD</scope>
</reference>
<reference key="49">
    <citation type="journal article" date="2002" name="Blood">
        <title>Paraneoplastic erythrocytosis associated with an inactivating point mutation of the von Hippel-Lindau gene in a renal cell carcinoma.</title>
        <authorList>
            <person name="Wiesener M.S."/>
            <person name="Seyfarth M."/>
            <person name="Warnecke C."/>
            <person name="Juergensen J.S."/>
            <person name="Rosenberger C."/>
            <person name="Morgan N.V."/>
            <person name="Maher E.R."/>
            <person name="Frei U."/>
            <person name="Eckardt K.-U."/>
        </authorList>
    </citation>
    <scope>VARIANT RCC PRO-163</scope>
    <scope>CHARACTERIZATION OF VARIANT RCC PRO-163</scope>
</reference>
<reference key="50">
    <citation type="journal article" date="2002" name="Invest. Ophthalmol. Vis. Sci.">
        <title>Retinal hemangioblastoma in von Hippel-Lindau disease: a clinical and molecular study.</title>
        <authorList>
            <person name="Dollfus H."/>
            <person name="Massin P."/>
            <person name="Taupin P."/>
            <person name="Nemeth C."/>
            <person name="Amara S."/>
            <person name="Giraud S."/>
            <person name="Beroud C."/>
            <person name="Dureau P."/>
            <person name="Gaudric A."/>
            <person name="Landais P."/>
            <person name="Richard S."/>
        </authorList>
    </citation>
    <scope>VARIANTS VHLD PRO-82 AND CYS-111</scope>
</reference>
<reference key="51">
    <citation type="journal article" date="2002" name="N. Engl. J. Med.">
        <title>Germ-line mutations in nonsyndromic pheochromocytoma.</title>
        <authorList>
            <consortium name="The Freiburg-Warsaw-Columbus pheochromocytoma study group"/>
            <person name="Neumann H.P.H."/>
            <person name="Bausch B."/>
            <person name="McWhinney S.R."/>
            <person name="Bender B.U."/>
            <person name="Gimm O."/>
            <person name="Franke G."/>
            <person name="Schipper J."/>
            <person name="Klisch J."/>
            <person name="Altehoefer C."/>
            <person name="Zerres K."/>
            <person name="Januszewicz A."/>
            <person name="Smith W.M."/>
            <person name="Munk R."/>
            <person name="Manz T."/>
            <person name="Glaesker S."/>
            <person name="Apel T.W."/>
            <person name="Treier M."/>
            <person name="Reineke M."/>
            <person name="Walz M.K."/>
            <person name="Hoang-Vu C."/>
            <person name="Brauckhoff M."/>
            <person name="Klein-Franke A."/>
            <person name="Klose P."/>
            <person name="Schmidt H."/>
            <person name="Maier-Woelfle M."/>
            <person name="Peczkowska M."/>
            <person name="Szmigielski C."/>
            <person name="Eng C."/>
        </authorList>
    </citation>
    <scope>VARIANTS PCC ALA-65; TRP-68; ASN-80; SER-93; CYS-93; HIS-98; GLY-107; LEU-119; ILE-122; CYS-136; ASN-156; CYS-156; GLN-161; PRO-161; TRP-167; GLN-167; VAL-188 AND GLN-198</scope>
</reference>
<reference key="52">
    <citation type="journal article" date="2003" name="Am. J. Hum. Genet.">
        <title>Mutations of von Hippel-Lindau tumor-suppressor gene and congenital polycythemia.</title>
        <authorList>
            <person name="Pastore Y.D."/>
            <person name="Jedlickova K."/>
            <person name="Guan Y."/>
            <person name="Liu E."/>
            <person name="Fahner J."/>
            <person name="Hasle H."/>
            <person name="Prchal J.F."/>
            <person name="Prchal J.T."/>
        </authorList>
    </citation>
    <scope>VARIANTS ECYT2 VAL-188; ASP-191; SER-192 AND TRP-200</scope>
</reference>
<reference key="53">
    <citation type="journal article" date="2003" name="Cancer Res.">
        <title>Mutations in the SDHB gene are associated with extra-adrenal and/or malignant phaeochromocytomas.</title>
        <authorList>
            <person name="Gimenez-Roqueplo A.-P."/>
            <person name="Favier J."/>
            <person name="Rustin P."/>
            <person name="Rieubland C."/>
            <person name="Crespin M."/>
            <person name="Nau V."/>
            <person name="Khau Van Kien P."/>
            <person name="Corvol P."/>
            <person name="Plouin P.-F."/>
            <person name="Jeunemaitre X."/>
        </authorList>
    </citation>
    <scope>VARIANTS PCC LEU-25 AND CYS-156</scope>
</reference>
<reference key="54">
    <citation type="journal article" date="2004" name="Am. J. Hum. Genet.">
        <authorList>
            <person name="Pastore Y.D."/>
            <person name="Jedlickova K."/>
            <person name="Guan Y."/>
            <person name="Liu E."/>
            <person name="Fahner J."/>
            <person name="Hasle H."/>
            <person name="Prchal J.F."/>
            <person name="Prchal J.T."/>
        </authorList>
    </citation>
    <scope>ERRATUM OF PUBMED:14500403</scope>
</reference>
<reference key="55">
    <citation type="journal article" date="2003" name="Blood">
        <title>Mutations in the VHL gene in sporadic apparently congenital polycythemia.</title>
        <authorList>
            <person name="Pastore Y.D."/>
            <person name="Jelinek J."/>
            <person name="Ang S."/>
            <person name="Guan Y."/>
            <person name="Liu E."/>
            <person name="Jedlickova K."/>
            <person name="Krishnamurti L."/>
            <person name="Prchal J.T."/>
        </authorList>
    </citation>
    <scope>VARIANTS ECYT2 TYR-126; LEU-130 AND TRP-200</scope>
</reference>
<reference key="56">
    <citation type="journal article" date="2006" name="Am. J. Med. Genet. A">
        <title>The von Hippel-Lindau (VHL) germline mutation V84L manifests as early-onset bilateral pheochromocytoma.</title>
        <authorList>
            <person name="Abbott M.-A."/>
            <person name="Nathanson K.L."/>
            <person name="Nightingale S."/>
            <person name="Maher E.R."/>
            <person name="Greenstein R.M."/>
        </authorList>
    </citation>
    <scope>VARIANT VHLD LEU-84</scope>
</reference>
<reference key="57">
    <citation type="journal article" date="2007" name="Nature">
        <title>Patterns of somatic mutation in human cancer genomes.</title>
        <authorList>
            <person name="Greenman C."/>
            <person name="Stephens P."/>
            <person name="Smith R."/>
            <person name="Dalgliesh G.L."/>
            <person name="Hunter C."/>
            <person name="Bignell G."/>
            <person name="Davies H."/>
            <person name="Teague J."/>
            <person name="Butler A."/>
            <person name="Stevens C."/>
            <person name="Edkins S."/>
            <person name="O'Meara S."/>
            <person name="Vastrik I."/>
            <person name="Schmidt E.E."/>
            <person name="Avis T."/>
            <person name="Barthorpe S."/>
            <person name="Bhamra G."/>
            <person name="Buck G."/>
            <person name="Choudhury B."/>
            <person name="Clements J."/>
            <person name="Cole J."/>
            <person name="Dicks E."/>
            <person name="Forbes S."/>
            <person name="Gray K."/>
            <person name="Halliday K."/>
            <person name="Harrison R."/>
            <person name="Hills K."/>
            <person name="Hinton J."/>
            <person name="Jenkinson A."/>
            <person name="Jones D."/>
            <person name="Menzies A."/>
            <person name="Mironenko T."/>
            <person name="Perry J."/>
            <person name="Raine K."/>
            <person name="Richardson D."/>
            <person name="Shepherd R."/>
            <person name="Small A."/>
            <person name="Tofts C."/>
            <person name="Varian J."/>
            <person name="Webb T."/>
            <person name="West S."/>
            <person name="Widaa S."/>
            <person name="Yates A."/>
            <person name="Cahill D.P."/>
            <person name="Louis D.N."/>
            <person name="Goldstraw P."/>
            <person name="Nicholson A.G."/>
            <person name="Brasseur F."/>
            <person name="Looijenga L."/>
            <person name="Weber B.L."/>
            <person name="Chiew Y.-E."/>
            <person name="DeFazio A."/>
            <person name="Greaves M.F."/>
            <person name="Green A.R."/>
            <person name="Campbell P."/>
            <person name="Birney E."/>
            <person name="Easton D.F."/>
            <person name="Chenevix-Trench G."/>
            <person name="Tan M.-H."/>
            <person name="Khoo S.K."/>
            <person name="Teh B.T."/>
            <person name="Yuen S.T."/>
            <person name="Leung S.Y."/>
            <person name="Wooster R."/>
            <person name="Futreal P.A."/>
            <person name="Stratton M.R."/>
        </authorList>
    </citation>
    <scope>VARIANTS [LARGE SCALE ANALYSIS] LEU-25 AND SER-86</scope>
</reference>
<name>VHL_HUMAN</name>
<protein>
    <recommendedName>
        <fullName>von Hippel-Lindau disease tumor suppressor</fullName>
    </recommendedName>
    <alternativeName>
        <fullName>Protein G7</fullName>
    </alternativeName>
    <alternativeName>
        <fullName>pVHL</fullName>
    </alternativeName>
</protein>
<proteinExistence type="evidence at protein level"/>
<gene>
    <name type="primary">VHL</name>
</gene>
<evidence type="ECO:0000250" key="1">
    <source>
        <dbReference type="UniProtKB" id="Q64259"/>
    </source>
</evidence>
<evidence type="ECO:0000256" key="2">
    <source>
        <dbReference type="SAM" id="MobiDB-lite"/>
    </source>
</evidence>
<evidence type="ECO:0000269" key="3">
    <source>
    </source>
</evidence>
<evidence type="ECO:0000269" key="4">
    <source>
    </source>
</evidence>
<evidence type="ECO:0000269" key="5">
    <source>
    </source>
</evidence>
<evidence type="ECO:0000269" key="6">
    <source>
    </source>
</evidence>
<evidence type="ECO:0000269" key="7">
    <source>
    </source>
</evidence>
<evidence type="ECO:0000269" key="8">
    <source>
    </source>
</evidence>
<evidence type="ECO:0000269" key="9">
    <source>
    </source>
</evidence>
<evidence type="ECO:0000269" key="10">
    <source>
    </source>
</evidence>
<evidence type="ECO:0000269" key="11">
    <source>
    </source>
</evidence>
<evidence type="ECO:0000269" key="12">
    <source>
    </source>
</evidence>
<evidence type="ECO:0000269" key="13">
    <source>
    </source>
</evidence>
<evidence type="ECO:0000269" key="14">
    <source>
    </source>
</evidence>
<evidence type="ECO:0000269" key="15">
    <source>
    </source>
</evidence>
<evidence type="ECO:0000269" key="16">
    <source>
    </source>
</evidence>
<evidence type="ECO:0000269" key="17">
    <source>
    </source>
</evidence>
<evidence type="ECO:0000269" key="18">
    <source>
    </source>
</evidence>
<evidence type="ECO:0000269" key="19">
    <source>
    </source>
</evidence>
<evidence type="ECO:0000269" key="20">
    <source>
    </source>
</evidence>
<evidence type="ECO:0000269" key="21">
    <source>
    </source>
</evidence>
<evidence type="ECO:0000269" key="22">
    <source>
    </source>
</evidence>
<evidence type="ECO:0000269" key="23">
    <source>
    </source>
</evidence>
<evidence type="ECO:0000269" key="24">
    <source>
    </source>
</evidence>
<evidence type="ECO:0000269" key="25">
    <source>
    </source>
</evidence>
<evidence type="ECO:0000269" key="26">
    <source>
    </source>
</evidence>
<evidence type="ECO:0000269" key="27">
    <source>
    </source>
</evidence>
<evidence type="ECO:0000269" key="28">
    <source>
    </source>
</evidence>
<evidence type="ECO:0000269" key="29">
    <source>
    </source>
</evidence>
<evidence type="ECO:0000269" key="30">
    <source>
    </source>
</evidence>
<evidence type="ECO:0000269" key="31">
    <source>
    </source>
</evidence>
<evidence type="ECO:0000269" key="32">
    <source>
    </source>
</evidence>
<evidence type="ECO:0000269" key="33">
    <source>
    </source>
</evidence>
<evidence type="ECO:0000269" key="34">
    <source>
    </source>
</evidence>
<evidence type="ECO:0000269" key="35">
    <source>
    </source>
</evidence>
<evidence type="ECO:0000269" key="36">
    <source>
    </source>
</evidence>
<evidence type="ECO:0000269" key="37">
    <source>
    </source>
</evidence>
<evidence type="ECO:0000269" key="38">
    <source>
    </source>
</evidence>
<evidence type="ECO:0000269" key="39">
    <source>
    </source>
</evidence>
<evidence type="ECO:0000269" key="40">
    <source>
    </source>
</evidence>
<evidence type="ECO:0000269" key="41">
    <source>
    </source>
</evidence>
<evidence type="ECO:0000269" key="42">
    <source>
    </source>
</evidence>
<evidence type="ECO:0000269" key="43">
    <source>
    </source>
</evidence>
<evidence type="ECO:0000269" key="44">
    <source>
    </source>
</evidence>
<evidence type="ECO:0000269" key="45">
    <source>
    </source>
</evidence>
<evidence type="ECO:0000269" key="46">
    <source>
    </source>
</evidence>
<evidence type="ECO:0000269" key="47">
    <source>
    </source>
</evidence>
<evidence type="ECO:0000269" key="48">
    <source>
    </source>
</evidence>
<evidence type="ECO:0000269" key="49">
    <source>
    </source>
</evidence>
<evidence type="ECO:0000269" key="50">
    <source>
    </source>
</evidence>
<evidence type="ECO:0000269" key="51">
    <source>
    </source>
</evidence>
<evidence type="ECO:0000269" key="52">
    <source ref="46"/>
</evidence>
<evidence type="ECO:0000269" key="53">
    <source ref="6"/>
</evidence>
<evidence type="ECO:0000303" key="54">
    <source>
    </source>
</evidence>
<evidence type="ECO:0000303" key="55">
    <source>
    </source>
</evidence>
<evidence type="ECO:0000305" key="56"/>
<evidence type="ECO:0007829" key="57">
    <source>
        <dbReference type="PDB" id="3ZTC"/>
    </source>
</evidence>
<evidence type="ECO:0007829" key="58">
    <source>
        <dbReference type="PDB" id="6GFX"/>
    </source>
</evidence>
<evidence type="ECO:0007829" key="59">
    <source>
        <dbReference type="PDB" id="7Z76"/>
    </source>
</evidence>
<evidence type="ECO:0007829" key="60">
    <source>
        <dbReference type="PDB" id="8BB2"/>
    </source>
</evidence>
<evidence type="ECO:0007829" key="61">
    <source>
        <dbReference type="PDB" id="8BDM"/>
    </source>
</evidence>
<evidence type="ECO:0007829" key="62">
    <source>
        <dbReference type="PDB" id="8BDN"/>
    </source>
</evidence>
<evidence type="ECO:0007829" key="63">
    <source>
        <dbReference type="PDB" id="8P0F"/>
    </source>
</evidence>
<comment type="function">
    <text evidence="8 26 28 31">Involved in the ubiquitination and subsequent proteasomal degradation via the von Hippel-Lindau ubiquitination complex (PubMed:10944113, PubMed:17981124, PubMed:19584355). Seems to act as a target recruitment subunit in the E3 ubiquitin ligase complex and recruits hydroxylated hypoxia-inducible factor (HIF) under normoxic conditions (PubMed:10944113, PubMed:17981124). Involved in transcriptional repression through interaction with HIF1A, HIF1AN and histone deacetylases (PubMed:10944113, PubMed:17981124). Ubiquitinates, in an oxygen-responsive manner, ADRB2 (PubMed:19584355). Acts as a negative regulator of mTORC1 by promoting ubiquitination and degradation of RPTOR (PubMed:34290272).</text>
</comment>
<comment type="pathway">
    <text evidence="31">Protein modification; protein ubiquitination.</text>
</comment>
<comment type="subunit">
    <text evidence="1 3 7 8 9 10 11 14 15 16 17 23 26 27 28 29 30 32 44">Component of the VCB (VHL-Elongin BC-CUL2) complex; this complex acts as a ubiquitin-ligase E3 and directs proteasome-dependent degradation of targeted proteins. Interacts with CUL2; this interaction is dependent on the integrity of the trimeric VCB complex. Interacts (via the beta domain) with HIF1A (via the NTAD domain); this interaction mediates degradation of HIF1A in normoxia and, in hypoxia, prevents ubiquitination and degradation of HIF1A by mediating hypoxia-induced translocation to the nucleus, a process which requires a hypoxia-dependent regulatory signal. Interacts with ADRB2; the interaction, in normoxia, is dependent on hydroxylation of ADRB2 and the subsequent VCB-mediated ubiquitination and degradation of ADRB2. Under hypoxia, hydroxylation, interaction with VHL, ubiquitination and subsequent degradation of ADRB2 are dramatically decreased. Interacts with RNF139, USP33 and JADE1. Found in a complex composed of LIMD1, VHL, EGLN1/PHD2, ELOB and CUL2. Isoform 1 and isoform 3 interact with LIMD1 (via LIM zinc-binding 2), AJUBA (via LIM domains) and WTIP (via LIM domains). Interacts with EPAS1. Interacts with CARD9. Interacts with DCUN1D1 independently of CUL2; this interaction engages DCUN1D1 in the VCB complex and triggers CUL2 neddylation and consequently cullin ring ligase (CRL) substrates polyubiquitylation (PubMed:23401859). Interacts with ALAS1 (hydroxylated form) (PubMed:16234850). Interacts with IGFBP1 (By similarity).</text>
</comment>
<comment type="interaction">
    <interactant intactId="EBI-301246">
        <id>P40337</id>
    </interactant>
    <interactant intactId="EBI-20853463">
        <id>Q13231</id>
        <label>CHIT1</label>
    </interactant>
    <organismsDiffer>false</organismsDiffer>
    <experiments>2</experiments>
</comment>
<comment type="interaction">
    <interactant intactId="EBI-301246">
        <id>P40337</id>
    </interactant>
    <interactant intactId="EBI-456179">
        <id>Q13617</id>
        <label>CUL2</label>
    </interactant>
    <organismsDiffer>false</organismsDiffer>
    <experiments>18</experiments>
</comment>
<comment type="interaction">
    <interactant intactId="EBI-301246">
        <id>P40337</id>
    </interactant>
    <interactant intactId="EBI-1220319">
        <id>P02751</id>
        <label>FN1</label>
    </interactant>
    <organismsDiffer>false</organismsDiffer>
    <experiments>2</experiments>
</comment>
<comment type="interaction">
    <interactant intactId="EBI-301246">
        <id>P40337</id>
    </interactant>
    <interactant intactId="EBI-724997">
        <id>Q9UM11</id>
        <label>FZR1</label>
    </interactant>
    <organismsDiffer>false</organismsDiffer>
    <experiments>2</experiments>
</comment>
<comment type="interaction">
    <interactant intactId="EBI-301246">
        <id>P40337</id>
    </interactant>
    <interactant intactId="EBI-447269">
        <id>Q16665</id>
        <label>HIF1A</label>
    </interactant>
    <organismsDiffer>false</organismsDiffer>
    <experiments>20</experiments>
</comment>
<comment type="interaction">
    <interactant intactId="EBI-301246">
        <id>P40337</id>
    </interactant>
    <interactant intactId="EBI-719024">
        <id>P14866</id>
        <label>HNRNPL</label>
    </interactant>
    <organismsDiffer>false</organismsDiffer>
    <experiments>2</experiments>
</comment>
<comment type="interaction">
    <interactant intactId="EBI-301246">
        <id>P40337</id>
    </interactant>
    <interactant intactId="EBI-724076">
        <id>Q99750</id>
        <label>MDFI</label>
    </interactant>
    <organismsDiffer>false</organismsDiffer>
    <experiments>4</experiments>
</comment>
<comment type="interaction">
    <interactant intactId="EBI-301246">
        <id>P40337</id>
    </interactant>
    <interactant intactId="EBI-295351">
        <id>Q05513</id>
        <label>PRKCZ</label>
    </interactant>
    <organismsDiffer>false</organismsDiffer>
    <experiments>3</experiments>
</comment>
<comment type="interaction">
    <interactant intactId="EBI-301246">
        <id>P40337</id>
    </interactant>
    <interactant intactId="EBI-78738">
        <id>Q99873</id>
        <label>PRMT1</label>
    </interactant>
    <organismsDiffer>false</organismsDiffer>
    <experiments>2</experiments>
</comment>
<comment type="interaction">
    <interactant intactId="EBI-301246">
        <id>P40337</id>
    </interactant>
    <interactant intactId="EBI-296739">
        <id>P63244</id>
        <label>RACK1</label>
    </interactant>
    <organismsDiffer>false</organismsDiffer>
    <experiments>9</experiments>
</comment>
<comment type="interaction">
    <interactant intactId="EBI-301246">
        <id>P40337</id>
    </interactant>
    <interactant intactId="EBI-1551681">
        <id>Q8WU17</id>
        <label>RNF139</label>
    </interactant>
    <organismsDiffer>false</organismsDiffer>
    <experiments>2</experiments>
</comment>
<comment type="interaction">
    <interactant intactId="EBI-301246">
        <id>P40337</id>
    </interactant>
    <interactant intactId="EBI-727668">
        <id>P21980</id>
        <label>TGM2</label>
    </interactant>
    <organismsDiffer>false</organismsDiffer>
    <experiments>10</experiments>
</comment>
<comment type="interaction">
    <interactant intactId="EBI-301246">
        <id>P40337</id>
    </interactant>
    <interactant intactId="EBI-298954">
        <id>Q61221</id>
        <label>Hif1a</label>
    </interactant>
    <organismsDiffer>true</organismsDiffer>
    <experiments>2</experiments>
</comment>
<comment type="interaction">
    <interactant intactId="EBI-301246">
        <id>P40337</id>
    </interactant>
    <interactant intactId="EBI-25487235">
        <id>PRO_0000037322</id>
        <label>rep</label>
        <dbReference type="UniProtKB" id="P0C6X7"/>
    </interactant>
    <organismsDiffer>true</organismsDiffer>
    <experiments>7</experiments>
</comment>
<comment type="interaction">
    <interactant intactId="EBI-3504450">
        <id>P40337-1</id>
    </interactant>
    <interactant intactId="EBI-724997">
        <id>Q9UM11</id>
        <label>FZR1</label>
    </interactant>
    <organismsDiffer>false</organismsDiffer>
    <experiments>2</experiments>
</comment>
<comment type="interaction">
    <interactant intactId="EBI-3504450">
        <id>P40337-1</id>
    </interactant>
    <interactant intactId="EBI-308084">
        <id>P08151</id>
        <label>GLI1</label>
    </interactant>
    <organismsDiffer>false</organismsDiffer>
    <experiments>2</experiments>
</comment>
<comment type="interaction">
    <interactant intactId="EBI-12157263">
        <id>P40337-2</id>
    </interactant>
    <interactant intactId="EBI-707573">
        <id>Q8WXK3</id>
        <label>ASB13</label>
    </interactant>
    <organismsDiffer>false</organismsDiffer>
    <experiments>3</experiments>
</comment>
<comment type="interaction">
    <interactant intactId="EBI-12157263">
        <id>P40337-2</id>
    </interactant>
    <interactant intactId="EBI-14199987">
        <id>Q9Y575-3</id>
        <label>ASB3</label>
    </interactant>
    <organismsDiffer>false</organismsDiffer>
    <experiments>3</experiments>
</comment>
<comment type="interaction">
    <interactant intactId="EBI-12157263">
        <id>P40337-2</id>
    </interactant>
    <interactant intactId="EBI-3942509">
        <id>Q9H765</id>
        <label>ASB8</label>
    </interactant>
    <organismsDiffer>false</organismsDiffer>
    <experiments>3</experiments>
</comment>
<comment type="interaction">
    <interactant intactId="EBI-12157263">
        <id>P40337-2</id>
    </interactant>
    <interactant intactId="EBI-25891409">
        <id>Q99700-5</id>
        <label>ATXN2</label>
    </interactant>
    <organismsDiffer>false</organismsDiffer>
    <experiments>3</experiments>
</comment>
<comment type="interaction">
    <interactant intactId="EBI-12157263">
        <id>P40337-2</id>
    </interactant>
    <interactant intactId="EBI-1263541">
        <id>O14867</id>
        <label>BACH1</label>
    </interactant>
    <organismsDiffer>false</organismsDiffer>
    <experiments>3</experiments>
</comment>
<comment type="interaction">
    <interactant intactId="EBI-12157263">
        <id>P40337-2</id>
    </interactant>
    <interactant intactId="EBI-25879469">
        <id>Q13939</id>
        <label>CCIN</label>
    </interactant>
    <organismsDiffer>false</organismsDiffer>
    <experiments>3</experiments>
</comment>
<comment type="interaction">
    <interactant intactId="EBI-12157263">
        <id>P40337-2</id>
    </interactant>
    <interactant intactId="EBI-395261">
        <id>P24863</id>
        <label>CCNC</label>
    </interactant>
    <organismsDiffer>false</organismsDiffer>
    <experiments>3</experiments>
</comment>
<comment type="interaction">
    <interactant intactId="EBI-12157263">
        <id>P40337-2</id>
    </interactant>
    <interactant intactId="EBI-25895525">
        <id>Q8TBB7</id>
        <label>DCAF5</label>
    </interactant>
    <organismsDiffer>false</organismsDiffer>
    <experiments>3</experiments>
</comment>
<comment type="interaction">
    <interactant intactId="EBI-12157263">
        <id>P40337-2</id>
    </interactant>
    <interactant intactId="EBI-25842815">
        <id>Q5TAQ9-2</id>
        <label>DCAF8</label>
    </interactant>
    <organismsDiffer>false</organismsDiffer>
    <experiments>3</experiments>
</comment>
<comment type="interaction">
    <interactant intactId="EBI-12157263">
        <id>P40337-2</id>
    </interactant>
    <interactant intactId="EBI-1176171">
        <id>Q92466</id>
        <label>DDB2</label>
    </interactant>
    <organismsDiffer>false</organismsDiffer>
    <experiments>3</experiments>
</comment>
<comment type="interaction">
    <interactant intactId="EBI-12157263">
        <id>P40337-2</id>
    </interactant>
    <interactant intactId="EBI-715104">
        <id>Q9NX09</id>
        <label>DDIT4</label>
    </interactant>
    <organismsDiffer>false</organismsDiffer>
    <experiments>3</experiments>
</comment>
<comment type="interaction">
    <interactant intactId="EBI-12157263">
        <id>P40337-2</id>
    </interactant>
    <interactant intactId="EBI-10976677">
        <id>G5E9A7</id>
        <label>DMWD</label>
    </interactant>
    <organismsDiffer>false</organismsDiffer>
    <experiments>3</experiments>
</comment>
<comment type="interaction">
    <interactant intactId="EBI-12157263">
        <id>P40337-2</id>
    </interactant>
    <interactant intactId="EBI-750300">
        <id>Q01658</id>
        <label>DR1</label>
    </interactant>
    <organismsDiffer>false</organismsDiffer>
    <experiments>3</experiments>
</comment>
<comment type="interaction">
    <interactant intactId="EBI-12157263">
        <id>P40337-2</id>
    </interactant>
    <interactant intactId="EBI-1176075">
        <id>Q9NZJ0</id>
        <label>DTL</label>
    </interactant>
    <organismsDiffer>false</organismsDiffer>
    <experiments>3</experiments>
</comment>
<comment type="interaction">
    <interactant intactId="EBI-12157263">
        <id>P40337-2</id>
    </interactant>
    <interactant intactId="EBI-11132357">
        <id>O75530-2</id>
        <label>EED</label>
    </interactant>
    <organismsDiffer>false</organismsDiffer>
    <experiments>3</experiments>
</comment>
<comment type="interaction">
    <interactant intactId="EBI-12157263">
        <id>P40337-2</id>
    </interactant>
    <interactant intactId="EBI-2340132">
        <id>Q9UI10</id>
        <label>EIF2B4</label>
    </interactant>
    <organismsDiffer>false</organismsDiffer>
    <experiments>3</experiments>
</comment>
<comment type="interaction">
    <interactant intactId="EBI-12157263">
        <id>P40337-2</id>
    </interactant>
    <interactant intactId="EBI-741705">
        <id>Q8IYF1</id>
        <label>ELOA2</label>
    </interactant>
    <organismsDiffer>false</organismsDiffer>
    <experiments>3</experiments>
</comment>
<comment type="interaction">
    <interactant intactId="EBI-12157263">
        <id>P40337-2</id>
    </interactant>
    <interactant intactId="EBI-764342">
        <id>Q9H2C0</id>
        <label>GAN</label>
    </interactant>
    <organismsDiffer>false</organismsDiffer>
    <experiments>3</experiments>
</comment>
<comment type="interaction">
    <interactant intactId="EBI-12157263">
        <id>P40337-2</id>
    </interactant>
    <interactant intactId="EBI-356942">
        <id>P62879</id>
        <label>GNB2</label>
    </interactant>
    <organismsDiffer>false</organismsDiffer>
    <experiments>3</experiments>
</comment>
<comment type="interaction">
    <interactant intactId="EBI-12157263">
        <id>P40337-2</id>
    </interactant>
    <interactant intactId="EBI-1054873">
        <id>Q9Y5Q9</id>
        <label>GTF3C3</label>
    </interactant>
    <organismsDiffer>false</organismsDiffer>
    <experiments>3</experiments>
</comment>
<comment type="interaction">
    <interactant intactId="EBI-12157263">
        <id>P40337-2</id>
    </interactant>
    <interactant intactId="EBI-7116203">
        <id>O75031</id>
        <label>HSF2BP</label>
    </interactant>
    <organismsDiffer>false</organismsDiffer>
    <experiments>6</experiments>
</comment>
<comment type="interaction">
    <interactant intactId="EBI-12157263">
        <id>P40337-2</id>
    </interactant>
    <interactant intactId="EBI-466029">
        <id>P42858</id>
        <label>HTT</label>
    </interactant>
    <organismsDiffer>false</organismsDiffer>
    <experiments>12</experiments>
</comment>
<comment type="interaction">
    <interactant intactId="EBI-12157263">
        <id>P40337-2</id>
    </interactant>
    <interactant intactId="EBI-1055254">
        <id>Q8WXH2</id>
        <label>JPH3</label>
    </interactant>
    <organismsDiffer>false</organismsDiffer>
    <experiments>3</experiments>
</comment>
<comment type="interaction">
    <interactant intactId="EBI-12157263">
        <id>P40337-2</id>
    </interactant>
    <interactant intactId="EBI-11147603">
        <id>Q9BVA0</id>
        <label>KATNB1</label>
    </interactant>
    <organismsDiffer>false</organismsDiffer>
    <experiments>3</experiments>
</comment>
<comment type="interaction">
    <interactant intactId="EBI-12157263">
        <id>P40337-2</id>
    </interactant>
    <interactant intactId="EBI-10975473">
        <id>O60333-2</id>
        <label>KIF1B</label>
    </interactant>
    <organismsDiffer>false</organismsDiffer>
    <experiments>3</experiments>
</comment>
<comment type="interaction">
    <interactant intactId="EBI-12157263">
        <id>P40337-2</id>
    </interactant>
    <interactant intactId="EBI-6426228">
        <id>Q9NR64</id>
        <label>KLHL1</label>
    </interactant>
    <organismsDiffer>false</organismsDiffer>
    <experiments>3</experiments>
</comment>
<comment type="interaction">
    <interactant intactId="EBI-12157263">
        <id>P40337-2</id>
    </interactant>
    <interactant intactId="EBI-740929">
        <id>Q53G59</id>
        <label>KLHL12</label>
    </interactant>
    <organismsDiffer>false</organismsDiffer>
    <experiments>3</experiments>
</comment>
<comment type="interaction">
    <interactant intactId="EBI-12157263">
        <id>P40337-2</id>
    </interactant>
    <interactant intactId="EBI-21328926">
        <id>Q6TDP4</id>
        <label>KLHL17</label>
    </interactant>
    <organismsDiffer>false</organismsDiffer>
    <experiments>3</experiments>
</comment>
<comment type="interaction">
    <interactant intactId="EBI-12157263">
        <id>P40337-2</id>
    </interactant>
    <interactant intactId="EBI-2512246">
        <id>Q8NBE8</id>
        <label>KLHL23</label>
    </interactant>
    <organismsDiffer>false</organismsDiffer>
    <experiments>3</experiments>
</comment>
<comment type="interaction">
    <interactant intactId="EBI-12157263">
        <id>P40337-2</id>
    </interactant>
    <interactant intactId="EBI-5353084">
        <id>O60662</id>
        <label>KLHL41</label>
    </interactant>
    <organismsDiffer>false</organismsDiffer>
    <experiments>3</experiments>
</comment>
<comment type="interaction">
    <interactant intactId="EBI-12157263">
        <id>P40337-2</id>
    </interactant>
    <interactant intactId="EBI-25895859">
        <id>Q8IXQ5-4</id>
        <label>KLHL7</label>
    </interactant>
    <organismsDiffer>false</organismsDiffer>
    <experiments>3</experiments>
</comment>
<comment type="interaction">
    <interactant intactId="EBI-12157263">
        <id>P40337-2</id>
    </interactant>
    <interactant intactId="EBI-354956">
        <id>Q08380</id>
        <label>LGALS3BP</label>
    </interactant>
    <organismsDiffer>false</organismsDiffer>
    <experiments>3</experiments>
</comment>
<comment type="interaction">
    <interactant intactId="EBI-12157263">
        <id>P40337-2</id>
    </interactant>
    <interactant intactId="EBI-724076">
        <id>Q99750</id>
        <label>MDFI</label>
    </interactant>
    <organismsDiffer>false</organismsDiffer>
    <experiments>4</experiments>
</comment>
<comment type="interaction">
    <interactant intactId="EBI-12157263">
        <id>P40337-2</id>
    </interactant>
    <interactant intactId="EBI-3942475">
        <id>Q96BF6</id>
        <label>NACC2</label>
    </interactant>
    <organismsDiffer>false</organismsDiffer>
    <experiments>3</experiments>
</comment>
<comment type="interaction">
    <interactant intactId="EBI-12157263">
        <id>P40337-2</id>
    </interactant>
    <interactant intactId="EBI-1014514">
        <id>P35240-4</id>
        <label>NF2</label>
    </interactant>
    <organismsDiffer>false</organismsDiffer>
    <experiments>3</experiments>
</comment>
<comment type="interaction">
    <interactant intactId="EBI-12157263">
        <id>P40337-2</id>
    </interactant>
    <interactant intactId="EBI-744871">
        <id>O00746</id>
        <label>NME4</label>
    </interactant>
    <organismsDiffer>false</organismsDiffer>
    <experiments>3</experiments>
</comment>
<comment type="interaction">
    <interactant intactId="EBI-12157263">
        <id>P40337-2</id>
    </interactant>
    <interactant intactId="EBI-25830675">
        <id>C9J082</id>
        <label>NPHP1</label>
    </interactant>
    <organismsDiffer>false</organismsDiffer>
    <experiments>3</experiments>
</comment>
<comment type="interaction">
    <interactant intactId="EBI-12157263">
        <id>P40337-2</id>
    </interactant>
    <interactant intactId="EBI-1058491">
        <id>Q96FW1</id>
        <label>OTUB1</label>
    </interactant>
    <organismsDiffer>false</organismsDiffer>
    <experiments>3</experiments>
</comment>
<comment type="interaction">
    <interactant intactId="EBI-12157263">
        <id>P40337-2</id>
    </interactant>
    <interactant intactId="EBI-6309018">
        <id>Q9NV79</id>
        <label>PCMTD2</label>
    </interactant>
    <organismsDiffer>false</organismsDiffer>
    <experiments>3</experiments>
</comment>
<comment type="interaction">
    <interactant intactId="EBI-12157263">
        <id>P40337-2</id>
    </interactant>
    <interactant intactId="EBI-722984">
        <id>Q8WWQ0</id>
        <label>PHIP</label>
    </interactant>
    <organismsDiffer>false</organismsDiffer>
    <experiments>3</experiments>
</comment>
<comment type="interaction">
    <interactant intactId="EBI-12157263">
        <id>P40337-2</id>
    </interactant>
    <interactant intactId="EBI-2861380">
        <id>Q8TCD6</id>
        <label>PHOSPHO2</label>
    </interactant>
    <organismsDiffer>false</organismsDiffer>
    <experiments>3</experiments>
</comment>
<comment type="interaction">
    <interactant intactId="EBI-12157263">
        <id>P40337-2</id>
    </interactant>
    <interactant intactId="EBI-21251460">
        <id>O60260-5</id>
        <label>PRKN</label>
    </interactant>
    <organismsDiffer>false</organismsDiffer>
    <experiments>3</experiments>
</comment>
<comment type="interaction">
    <interactant intactId="EBI-12157263">
        <id>P40337-2</id>
    </interactant>
    <interactant intactId="EBI-351098">
        <id>O14744</id>
        <label>PRMT5</label>
    </interactant>
    <organismsDiffer>false</organismsDiffer>
    <experiments>3</experiments>
</comment>
<comment type="interaction">
    <interactant intactId="EBI-12157263">
        <id>P40337-2</id>
    </interactant>
    <interactant intactId="EBI-10272071">
        <id>Q8TAS3</id>
        <label>PRRG2</label>
    </interactant>
    <organismsDiffer>false</organismsDiffer>
    <experiments>3</experiments>
</comment>
<comment type="interaction">
    <interactant intactId="EBI-12157263">
        <id>P40337-2</id>
    </interactant>
    <interactant intactId="EBI-396669">
        <id>Q9Y3C5</id>
        <label>RNF11</label>
    </interactant>
    <organismsDiffer>false</organismsDiffer>
    <experiments>3</experiments>
</comment>
<comment type="interaction">
    <interactant intactId="EBI-12157263">
        <id>P40337-2</id>
    </interactant>
    <interactant intactId="EBI-346977">
        <id>Q15393</id>
        <label>SF3B3</label>
    </interactant>
    <organismsDiffer>false</organismsDiffer>
    <experiments>3</experiments>
</comment>
<comment type="interaction">
    <interactant intactId="EBI-12157263">
        <id>P40337-2</id>
    </interactant>
    <interactant intactId="EBI-358545">
        <id>Q9GZS3</id>
        <label>SKIC8</label>
    </interactant>
    <organismsDiffer>false</organismsDiffer>
    <experiments>3</experiments>
</comment>
<comment type="interaction">
    <interactant intactId="EBI-12157263">
        <id>P40337-2</id>
    </interactant>
    <interactant intactId="EBI-2822550">
        <id>Q8IYM2</id>
        <label>SLFN12</label>
    </interactant>
    <organismsDiffer>false</organismsDiffer>
    <experiments>3</experiments>
</comment>
<comment type="interaction">
    <interactant intactId="EBI-12157263">
        <id>P40337-2</id>
    </interactant>
    <interactant intactId="EBI-985879">
        <id>P37840</id>
        <label>SNCA</label>
    </interactant>
    <organismsDiffer>false</organismsDiffer>
    <experiments>3</experiments>
</comment>
<comment type="interaction">
    <interactant intactId="EBI-12157263">
        <id>P40337-2</id>
    </interactant>
    <interactant intactId="EBI-617737">
        <id>O14508</id>
        <label>SOCS2</label>
    </interactant>
    <organismsDiffer>false</organismsDiffer>
    <experiments>3</experiments>
</comment>
<comment type="interaction">
    <interactant intactId="EBI-12157263">
        <id>P40337-2</id>
    </interactant>
    <interactant intactId="EBI-5235340">
        <id>Q7Z699</id>
        <label>SPRED1</label>
    </interactant>
    <organismsDiffer>false</organismsDiffer>
    <experiments>3</experiments>
</comment>
<comment type="interaction">
    <interactant intactId="EBI-12157263">
        <id>P40337-2</id>
    </interactant>
    <interactant intactId="EBI-2323233">
        <id>Q96A44</id>
        <label>SPSB4</label>
    </interactant>
    <organismsDiffer>false</organismsDiffer>
    <experiments>3</experiments>
</comment>
<comment type="interaction">
    <interactant intactId="EBI-12157263">
        <id>P40337-2</id>
    </interactant>
    <interactant intactId="EBI-372899">
        <id>Q13148</id>
        <label>TARDBP</label>
    </interactant>
    <organismsDiffer>false</organismsDiffer>
    <experiments>3</experiments>
</comment>
<comment type="interaction">
    <interactant intactId="EBI-12157263">
        <id>P40337-2</id>
    </interactant>
    <interactant intactId="EBI-25830716">
        <id>O43493-5</id>
        <label>TGOLN2</label>
    </interactant>
    <organismsDiffer>false</organismsDiffer>
    <experiments>3</experiments>
</comment>
<comment type="interaction">
    <interactant intactId="EBI-12157263">
        <id>P40337-2</id>
    </interactant>
    <interactant intactId="EBI-21757569">
        <id>Q8NFB2</id>
        <label>TMEM185A</label>
    </interactant>
    <organismsDiffer>false</organismsDiffer>
    <experiments>3</experiments>
</comment>
<comment type="interaction">
    <interactant intactId="EBI-12157263">
        <id>P40337-2</id>
    </interactant>
    <interactant intactId="EBI-473850">
        <id>P61086</id>
        <label>UBE2K</label>
    </interactant>
    <organismsDiffer>false</organismsDiffer>
    <experiments>3</experiments>
</comment>
<comment type="interaction">
    <interactant intactId="EBI-12157263">
        <id>P40337-2</id>
    </interactant>
    <interactant intactId="EBI-2339946">
        <id>Q9C0C9</id>
        <label>UBE2O</label>
    </interactant>
    <organismsDiffer>false</organismsDiffer>
    <experiments>3</experiments>
</comment>
<comment type="interaction">
    <interactant intactId="EBI-12157263">
        <id>P40337-2</id>
    </interactant>
    <interactant intactId="EBI-2339823">
        <id>Q16763</id>
        <label>UBE2S</label>
    </interactant>
    <organismsDiffer>false</organismsDiffer>
    <experiments>3</experiments>
</comment>
<comment type="interaction">
    <interactant intactId="EBI-12157263">
        <id>P40337-2</id>
    </interactant>
    <interactant intactId="EBI-21897992">
        <id>Q5VVX9-2</id>
        <label>UBE2U</label>
    </interactant>
    <organismsDiffer>false</organismsDiffer>
    <experiments>3</experiments>
</comment>
<comment type="interaction">
    <interactant intactId="EBI-12157263">
        <id>P40337-2</id>
    </interactant>
    <interactant intactId="EBI-11337915">
        <id>Q8N0U8</id>
        <label>VKORC1L1</label>
    </interactant>
    <organismsDiffer>false</organismsDiffer>
    <experiments>3</experiments>
</comment>
<comment type="interaction">
    <interactant intactId="EBI-12157263">
        <id>P40337-2</id>
    </interactant>
    <interactant intactId="EBI-2490660">
        <id>Q9GZL7</id>
        <label>WDR12</label>
    </interactant>
    <organismsDiffer>false</organismsDiffer>
    <experiments>3</experiments>
</comment>
<comment type="interaction">
    <interactant intactId="EBI-12157263">
        <id>P40337-2</id>
    </interactant>
    <interactant intactId="EBI-15821254">
        <id>Q8N5D0-4</id>
        <label>WDTC1</label>
    </interactant>
    <organismsDiffer>false</organismsDiffer>
    <experiments>3</experiments>
</comment>
<comment type="interaction">
    <interactant intactId="EBI-12157263">
        <id>P40337-2</id>
    </interactant>
    <interactant intactId="EBI-1171494">
        <id>Q9Y6I7</id>
        <label>WSB1</label>
    </interactant>
    <organismsDiffer>false</organismsDiffer>
    <experiments>3</experiments>
</comment>
<comment type="interaction">
    <interactant intactId="EBI-12157263">
        <id>P40337-2</id>
    </interactant>
    <interactant intactId="EBI-25895743">
        <id>Q8NCP5-3</id>
        <label>ZBTB44</label>
    </interactant>
    <organismsDiffer>false</organismsDiffer>
    <experiments>3</experiments>
</comment>
<comment type="interaction">
    <interactant intactId="EBI-12157263">
        <id>P40337-2</id>
    </interactant>
    <interactant intactId="EBI-2859943">
        <id>Q6ZSB9</id>
        <label>ZBTB49</label>
    </interactant>
    <organismsDiffer>false</organismsDiffer>
    <experiments>3</experiments>
</comment>
<comment type="interaction">
    <interactant intactId="EBI-12157263">
        <id>P40337-2</id>
    </interactant>
    <interactant intactId="EBI-7227791">
        <id>Q15916</id>
        <label>ZBTB6</label>
    </interactant>
    <organismsDiffer>false</organismsDiffer>
    <experiments>3</experiments>
</comment>
<comment type="interaction">
    <interactant intactId="EBI-12157263">
        <id>P40337-2</id>
    </interactant>
    <interactant intactId="EBI-10213055">
        <id>P52739-2</id>
        <label>ZNF131</label>
    </interactant>
    <organismsDiffer>false</organismsDiffer>
    <experiments>3</experiments>
</comment>
<comment type="interaction">
    <interactant intactId="EBI-12157263">
        <id>P40337-2</id>
    </interactant>
    <interactant intactId="EBI-25872486">
        <id>Q96BH6</id>
    </interactant>
    <organismsDiffer>false</organismsDiffer>
    <experiments>3</experiments>
</comment>
<comment type="interaction">
    <interactant intactId="EBI-301270">
        <id>P40337-3</id>
    </interactant>
    <interactant intactId="EBI-1765520">
        <id>O75912</id>
        <label>DGKI</label>
    </interactant>
    <organismsDiffer>false</organismsDiffer>
    <experiments>3</experiments>
</comment>
<comment type="interaction">
    <interactant intactId="EBI-301270">
        <id>P40337-3</id>
    </interactant>
    <interactant intactId="EBI-724997">
        <id>Q9UM11</id>
        <label>FZR1</label>
    </interactant>
    <organismsDiffer>false</organismsDiffer>
    <experiments>2</experiments>
</comment>
<comment type="interaction">
    <interactant intactId="EBI-301270">
        <id>P40337-3</id>
    </interactant>
    <interactant intactId="EBI-308084">
        <id>P08151</id>
        <label>GLI1</label>
    </interactant>
    <organismsDiffer>false</organismsDiffer>
    <experiments>2</experiments>
</comment>
<comment type="interaction">
    <interactant intactId="EBI-301270">
        <id>P40337-3</id>
    </interactant>
    <interactant intactId="EBI-749285">
        <id>Q15311</id>
        <label>RALBP1</label>
    </interactant>
    <organismsDiffer>false</organismsDiffer>
    <experiments>3</experiments>
</comment>
<comment type="subcellular location">
    <molecule>Isoform 1</molecule>
    <subcellularLocation>
        <location evidence="49">Cytoplasm</location>
    </subcellularLocation>
    <subcellularLocation>
        <location evidence="28">Cell membrane</location>
        <topology evidence="49">Peripheral membrane protein</topology>
    </subcellularLocation>
    <subcellularLocation>
        <location evidence="17 31">Endoplasmic reticulum</location>
    </subcellularLocation>
    <subcellularLocation>
        <location evidence="49">Nucleus</location>
    </subcellularLocation>
    <text evidence="28 49">Found predominantly in the cytoplasm and with less amounts nuclear or membrane-associated (PubMed:9751722). Colocalizes with ADRB2 at the cell membrane (PubMed:19584355).</text>
</comment>
<comment type="subcellular location">
    <molecule>Isoform 3</molecule>
    <subcellularLocation>
        <location evidence="49">Cytoplasm</location>
    </subcellularLocation>
    <subcellularLocation>
        <location evidence="49">Nucleus</location>
    </subcellularLocation>
    <text evidence="49">Equally distributed between the nucleus and the cytoplasm but not membrane-associated.</text>
</comment>
<comment type="alternative products">
    <event type="alternative splicing"/>
    <event type="alternative initiation"/>
    <isoform>
        <id>P40337-1</id>
        <name>1</name>
        <name>VHL30</name>
        <name>VHLp24(MPR)</name>
        <sequence type="displayed"/>
    </isoform>
    <isoform>
        <id>P40337-2</id>
        <name>2</name>
        <sequence type="described" ref="VSP_004488"/>
    </isoform>
    <isoform>
        <id>P40337-3</id>
        <name>3</name>
        <name evidence="55">VHL19</name>
        <name>VHLp18(MEA)</name>
        <sequence type="described" ref="VSP_007740"/>
    </isoform>
</comment>
<comment type="tissue specificity">
    <text>Expressed in the adult and fetal brain and kidney.</text>
</comment>
<comment type="developmental stage">
    <text evidence="41">At 4-10 weeks pc, strong expression in the developing central nervous system, kidneys, testis and lung. Differentially expressed within renal tubules.</text>
</comment>
<comment type="domain">
    <text>The Elongin BC complex binding domain is also known as BC-box with the consensus [APST]-L-x(3)-C-x(3)-[AILV].</text>
</comment>
<comment type="disease" evidence="13 21 47">
    <disease id="DI-02160">
        <name>Pheochromocytoma</name>
        <acronym>PCC</acronym>
        <description>A catecholamine-producing tumor of chromaffin tissue of the adrenal medulla or sympathetic paraganglia. The cardinal symptom, reflecting the increased secretion of epinephrine and norepinephrine, is hypertension, which may be persistent or intermittent.</description>
        <dbReference type="MIM" id="171300"/>
    </disease>
    <text>Disease susceptibility is associated with variants affecting the gene represented in this entry.</text>
</comment>
<comment type="disease" evidence="4 5 6 7 18 24 33 34 36 37 38 39 40 42 43 45 46 48 50 51 52">
    <disease id="DI-01131">
        <name>von Hippel-Lindau disease</name>
        <acronym>VHLD</acronym>
        <description>VHLD is a dominantly inherited familial cancer syndrome predisposing to a variety of malignant and benign neoplasms, most frequently retinal, cerebellar and spinal hemangioblastoma, renal cell carcinoma (RCC), pheochromocytoma, and pancreatic tumors. VHL type 1 is without pheochromocytoma, type 2 is with pheochromocytoma. VHL type 2 is further subdivided into types 2A (pheochromocytoma, retinal angioma, and hemangioblastomas without renal cell carcinoma and pancreatic cyst) and 2B (pheochromocytoma, retinal angioma, and hemangioblastomas with renal cell carcinoma and pancreatic cyst).</description>
        <dbReference type="MIM" id="193300"/>
    </disease>
    <text>The disease is caused by variants affecting the gene represented in this entry.</text>
</comment>
<comment type="disease" evidence="19 20">
    <disease id="DI-00480">
        <name>Erythrocytosis, familial, 2</name>
        <acronym>ECYT2</acronym>
        <description>An autosomal recessive disorder characterized by an increase in serum red blood cell mass, hypersensitivity of erythroid progenitors to erythropoietin, increased erythropoietin serum levels, and normal oxygen affinity. Patients with ECYT2 carry a high risk for peripheral thrombosis and cerebrovascular events.</description>
        <dbReference type="MIM" id="263400"/>
    </disease>
    <text>The disease is caused by variants affecting the gene represented in this entry.</text>
</comment>
<comment type="disease" evidence="12">
    <disease id="DI-02254">
        <name>Renal cell carcinoma</name>
        <acronym>RCC</acronym>
        <description>Renal cell carcinoma is a heterogeneous group of sporadic or hereditary carcinoma derived from cells of the proximal renal tubular epithelium. It is subclassified into clear cell renal carcinoma (non-papillary carcinoma), papillary renal cell carcinoma, chromophobe renal cell carcinoma, collecting duct carcinoma with medullary carcinoma of the kidney, and unclassified renal cell carcinoma. Clear cell renal cell carcinoma is the most common subtype.</description>
        <dbReference type="MIM" id="144700"/>
    </disease>
    <text>The disease is caused by variants affecting the gene represented in this entry.</text>
</comment>
<comment type="miscellaneous">
    <molecule>Isoform 1</molecule>
    <text>Major isoform.</text>
</comment>
<comment type="miscellaneous">
    <molecule>Isoform 3</molecule>
    <text evidence="56">Produced by alternative initiation at Met-54 of isoform 1.</text>
</comment>
<comment type="similarity">
    <text evidence="56">Belongs to the VHL family.</text>
</comment>
<sequence length="213" mass="24153">MPRRAENWDEAEVGAEEAGVEEYGPEEDGGEESGAEESGPEESGPEELGAEEEMEAGRPRPVLRSVNSREPSQVIFCNRSPRVVLPVWLNFDGEPQPYPTLPPGTGRRIHSYRGHLWLFRDAGTHDGLLVNQTELFVPSLNVDGQPIFANITLPVYTLKERCLQVVRSLVKPENYRRLDIVRSLYEDLEDHPNVQKDLERLTQERIAHQRMGD</sequence>